<proteinExistence type="evidence at protein level"/>
<dbReference type="EC" id="3.4.22.-"/>
<dbReference type="EC" id="3.4.21.113"/>
<dbReference type="EC" id="3.6.1.15"/>
<dbReference type="EC" id="3.6.4.13"/>
<dbReference type="EC" id="2.7.7.48"/>
<dbReference type="EMBL" id="J04358">
    <property type="protein sequence ID" value="AAA43844.2"/>
    <property type="molecule type" value="Genomic_RNA"/>
</dbReference>
<dbReference type="PDB" id="4CBG">
    <property type="method" value="X-ray"/>
    <property type="resolution" value="2.82 A"/>
    <property type="chains" value="A/B/C/D=1782-2280"/>
</dbReference>
<dbReference type="PDB" id="4CBH">
    <property type="method" value="X-ray"/>
    <property type="resolution" value="2.51 A"/>
    <property type="chains" value="A/B/C/D=1782-2280"/>
</dbReference>
<dbReference type="PDB" id="4CBI">
    <property type="method" value="X-ray"/>
    <property type="resolution" value="3.00 A"/>
    <property type="chains" value="A/B/C/D=1782-2280"/>
</dbReference>
<dbReference type="PDB" id="4CBL">
    <property type="method" value="X-ray"/>
    <property type="resolution" value="3.05 A"/>
    <property type="chains" value="A/B/C/D=1792-2280"/>
</dbReference>
<dbReference type="PDB" id="4CBM">
    <property type="method" value="X-ray"/>
    <property type="resolution" value="3.27 A"/>
    <property type="chains" value="A/B/C/D=1782-2280"/>
</dbReference>
<dbReference type="PDB" id="5MZ4">
    <property type="method" value="X-ray"/>
    <property type="resolution" value="3.05 A"/>
    <property type="chains" value="A/B=1590-2280"/>
</dbReference>
<dbReference type="PDBsum" id="4CBG"/>
<dbReference type="PDBsum" id="4CBH"/>
<dbReference type="PDBsum" id="4CBI"/>
<dbReference type="PDBsum" id="4CBL"/>
<dbReference type="PDBsum" id="4CBM"/>
<dbReference type="PDBsum" id="5MZ4"/>
<dbReference type="SMR" id="P19712"/>
<dbReference type="IntAct" id="P19712">
    <property type="interactions" value="96"/>
</dbReference>
<dbReference type="MEROPS" id="C53.001"/>
<dbReference type="MEROPS" id="S31.001"/>
<dbReference type="BRENDA" id="3.4.21.113">
    <property type="organism ID" value="1439"/>
</dbReference>
<dbReference type="Proteomes" id="UP000008568">
    <property type="component" value="Segment"/>
</dbReference>
<dbReference type="GO" id="GO:0030430">
    <property type="term" value="C:host cell cytoplasm"/>
    <property type="evidence" value="ECO:0007669"/>
    <property type="project" value="UniProtKB-SubCell"/>
</dbReference>
<dbReference type="GO" id="GO:0020002">
    <property type="term" value="C:host cell plasma membrane"/>
    <property type="evidence" value="ECO:0007669"/>
    <property type="project" value="UniProtKB-SubCell"/>
</dbReference>
<dbReference type="GO" id="GO:0044228">
    <property type="term" value="C:host cell surface"/>
    <property type="evidence" value="ECO:0007669"/>
    <property type="project" value="UniProtKB-SubCell"/>
</dbReference>
<dbReference type="GO" id="GO:0016020">
    <property type="term" value="C:membrane"/>
    <property type="evidence" value="ECO:0007669"/>
    <property type="project" value="UniProtKB-KW"/>
</dbReference>
<dbReference type="GO" id="GO:0055036">
    <property type="term" value="C:virion membrane"/>
    <property type="evidence" value="ECO:0007669"/>
    <property type="project" value="UniProtKB-SubCell"/>
</dbReference>
<dbReference type="GO" id="GO:0005524">
    <property type="term" value="F:ATP binding"/>
    <property type="evidence" value="ECO:0007669"/>
    <property type="project" value="UniProtKB-KW"/>
</dbReference>
<dbReference type="GO" id="GO:0016887">
    <property type="term" value="F:ATP hydrolysis activity"/>
    <property type="evidence" value="ECO:0007669"/>
    <property type="project" value="RHEA"/>
</dbReference>
<dbReference type="GO" id="GO:0015267">
    <property type="term" value="F:channel activity"/>
    <property type="evidence" value="ECO:0007669"/>
    <property type="project" value="UniProtKB-KW"/>
</dbReference>
<dbReference type="GO" id="GO:0004197">
    <property type="term" value="F:cysteine-type endopeptidase activity"/>
    <property type="evidence" value="ECO:0007669"/>
    <property type="project" value="InterPro"/>
</dbReference>
<dbReference type="GO" id="GO:0005525">
    <property type="term" value="F:GTP binding"/>
    <property type="evidence" value="ECO:0007669"/>
    <property type="project" value="UniProtKB-KW"/>
</dbReference>
<dbReference type="GO" id="GO:0033897">
    <property type="term" value="F:ribonuclease T2 activity"/>
    <property type="evidence" value="ECO:0000314"/>
    <property type="project" value="UniProtKB"/>
</dbReference>
<dbReference type="GO" id="GO:0003723">
    <property type="term" value="F:RNA binding"/>
    <property type="evidence" value="ECO:0007669"/>
    <property type="project" value="InterPro"/>
</dbReference>
<dbReference type="GO" id="GO:0003724">
    <property type="term" value="F:RNA helicase activity"/>
    <property type="evidence" value="ECO:0007669"/>
    <property type="project" value="UniProtKB-EC"/>
</dbReference>
<dbReference type="GO" id="GO:0003968">
    <property type="term" value="F:RNA-directed RNA polymerase activity"/>
    <property type="evidence" value="ECO:0007669"/>
    <property type="project" value="UniProtKB-KW"/>
</dbReference>
<dbReference type="GO" id="GO:0004252">
    <property type="term" value="F:serine-type endopeptidase activity"/>
    <property type="evidence" value="ECO:0007669"/>
    <property type="project" value="InterPro"/>
</dbReference>
<dbReference type="GO" id="GO:0070008">
    <property type="term" value="F:serine-type exopeptidase activity"/>
    <property type="evidence" value="ECO:0007669"/>
    <property type="project" value="InterPro"/>
</dbReference>
<dbReference type="GO" id="GO:0098670">
    <property type="term" value="P:entry receptor-mediated virion attachment to host cell"/>
    <property type="evidence" value="ECO:0007669"/>
    <property type="project" value="UniProtKB-KW"/>
</dbReference>
<dbReference type="GO" id="GO:0039654">
    <property type="term" value="P:fusion of virus membrane with host endosome membrane"/>
    <property type="evidence" value="ECO:0007669"/>
    <property type="project" value="UniProtKB-KW"/>
</dbReference>
<dbReference type="GO" id="GO:0034220">
    <property type="term" value="P:monoatomic ion transmembrane transport"/>
    <property type="evidence" value="ECO:0007669"/>
    <property type="project" value="UniProtKB-KW"/>
</dbReference>
<dbReference type="GO" id="GO:0006508">
    <property type="term" value="P:proteolysis"/>
    <property type="evidence" value="ECO:0007669"/>
    <property type="project" value="UniProtKB-KW"/>
</dbReference>
<dbReference type="GO" id="GO:0046718">
    <property type="term" value="P:symbiont entry into host cell"/>
    <property type="evidence" value="ECO:0007669"/>
    <property type="project" value="UniProtKB-KW"/>
</dbReference>
<dbReference type="GO" id="GO:0039520">
    <property type="term" value="P:symbiont-mediated activation of host autophagy"/>
    <property type="evidence" value="ECO:0007669"/>
    <property type="project" value="UniProtKB-KW"/>
</dbReference>
<dbReference type="GO" id="GO:0039548">
    <property type="term" value="P:symbiont-mediated suppression of host cytoplasmic pattern recognition receptor signaling pathway via inhibition of IRF3 activity"/>
    <property type="evidence" value="ECO:0007669"/>
    <property type="project" value="UniProtKB-KW"/>
</dbReference>
<dbReference type="GO" id="GO:0019082">
    <property type="term" value="P:viral protein processing"/>
    <property type="evidence" value="ECO:0007669"/>
    <property type="project" value="InterPro"/>
</dbReference>
<dbReference type="GO" id="GO:0039694">
    <property type="term" value="P:viral RNA genome replication"/>
    <property type="evidence" value="ECO:0007669"/>
    <property type="project" value="InterPro"/>
</dbReference>
<dbReference type="CDD" id="cd17931">
    <property type="entry name" value="DEXHc_viral_Ns3"/>
    <property type="match status" value="1"/>
</dbReference>
<dbReference type="CDD" id="cd23201">
    <property type="entry name" value="Pestivirus_RdRp"/>
    <property type="match status" value="1"/>
</dbReference>
<dbReference type="FunFam" id="2.60.320.20:FF:000001">
    <property type="entry name" value="Envelope glycoprotein E2"/>
    <property type="match status" value="1"/>
</dbReference>
<dbReference type="FunFam" id="3.30.70.270:FF:000083">
    <property type="entry name" value="Genome polyprotein"/>
    <property type="match status" value="1"/>
</dbReference>
<dbReference type="FunFam" id="3.40.50.300:FF:001125">
    <property type="entry name" value="Genome polyprotein"/>
    <property type="match status" value="1"/>
</dbReference>
<dbReference type="FunFam" id="3.40.50.300:FF:001127">
    <property type="entry name" value="Genome polyprotein"/>
    <property type="match status" value="1"/>
</dbReference>
<dbReference type="FunFam" id="3.90.730.10:FF:000005">
    <property type="entry name" value="Genome polyprotein"/>
    <property type="match status" value="1"/>
</dbReference>
<dbReference type="Gene3D" id="3.30.70.270">
    <property type="match status" value="2"/>
</dbReference>
<dbReference type="Gene3D" id="3.40.50.300">
    <property type="entry name" value="P-loop containing nucleotide triphosphate hydrolases"/>
    <property type="match status" value="2"/>
</dbReference>
<dbReference type="Gene3D" id="2.60.40.4200">
    <property type="entry name" value="Pestivirus envelope glycoprotein E2, C-terminal domain"/>
    <property type="match status" value="1"/>
</dbReference>
<dbReference type="Gene3D" id="2.60.320.20">
    <property type="entry name" value="Pestivirus envelope glycoprotein E2, domain A"/>
    <property type="match status" value="1"/>
</dbReference>
<dbReference type="Gene3D" id="2.60.40.3000">
    <property type="entry name" value="Pestivirus envelope glycoprotein E2, domain B"/>
    <property type="match status" value="1"/>
</dbReference>
<dbReference type="Gene3D" id="2.30.140.40">
    <property type="entry name" value="Pestivirus Npro endopeptidase C53, interaction domain"/>
    <property type="match status" value="1"/>
</dbReference>
<dbReference type="Gene3D" id="3.90.730.10">
    <property type="entry name" value="Ribonuclease T2-like"/>
    <property type="match status" value="1"/>
</dbReference>
<dbReference type="InterPro" id="IPR021824">
    <property type="entry name" value="Capsid-C_pestivirus"/>
</dbReference>
<dbReference type="InterPro" id="IPR043502">
    <property type="entry name" value="DNA/RNA_pol_sf"/>
</dbReference>
<dbReference type="InterPro" id="IPR011492">
    <property type="entry name" value="Flavi_DEAD"/>
</dbReference>
<dbReference type="InterPro" id="IPR014001">
    <property type="entry name" value="Helicase_ATP-bd"/>
</dbReference>
<dbReference type="InterPro" id="IPR001650">
    <property type="entry name" value="Helicase_C-like"/>
</dbReference>
<dbReference type="InterPro" id="IPR022120">
    <property type="entry name" value="NS2"/>
</dbReference>
<dbReference type="InterPro" id="IPR030399">
    <property type="entry name" value="NS2_C74"/>
</dbReference>
<dbReference type="InterPro" id="IPR049486">
    <property type="entry name" value="NS3-hel_C_flaviviridae"/>
</dbReference>
<dbReference type="InterPro" id="IPR027417">
    <property type="entry name" value="P-loop_NTPase"/>
</dbReference>
<dbReference type="InterPro" id="IPR008751">
    <property type="entry name" value="Peptidase_C53"/>
</dbReference>
<dbReference type="InterPro" id="IPR042542">
    <property type="entry name" value="Peptidase_C53_interaction"/>
</dbReference>
<dbReference type="InterPro" id="IPR032521">
    <property type="entry name" value="Pestivirus_E2"/>
</dbReference>
<dbReference type="InterPro" id="IPR042309">
    <property type="entry name" value="Pestivirus_E2_A"/>
</dbReference>
<dbReference type="InterPro" id="IPR042310">
    <property type="entry name" value="Pestivirus_E2_B"/>
</dbReference>
<dbReference type="InterPro" id="IPR042311">
    <property type="entry name" value="Pestivirus_E2_D"/>
</dbReference>
<dbReference type="InterPro" id="IPR000280">
    <property type="entry name" value="Pestivirus_NS3_S31"/>
</dbReference>
<dbReference type="InterPro" id="IPR043128">
    <property type="entry name" value="Rev_trsase/Diguanyl_cyclase"/>
</dbReference>
<dbReference type="InterPro" id="IPR007094">
    <property type="entry name" value="RNA-dir_pol_PSvirus"/>
</dbReference>
<dbReference type="InterPro" id="IPR002166">
    <property type="entry name" value="RNA_pol_HCV"/>
</dbReference>
<dbReference type="InterPro" id="IPR036430">
    <property type="entry name" value="RNase_T2-like_sf"/>
</dbReference>
<dbReference type="InterPro" id="IPR033130">
    <property type="entry name" value="RNase_T2_His_AS_2"/>
</dbReference>
<dbReference type="PANTHER" id="PTHR18934">
    <property type="entry name" value="ATP-DEPENDENT RNA HELICASE"/>
    <property type="match status" value="1"/>
</dbReference>
<dbReference type="PANTHER" id="PTHR18934:SF91">
    <property type="entry name" value="PRE-MRNA-SPLICING FACTOR ATP-DEPENDENT RNA HELICASE PRP16"/>
    <property type="match status" value="1"/>
</dbReference>
<dbReference type="Pfam" id="PF11889">
    <property type="entry name" value="Capsid_pestivir"/>
    <property type="match status" value="1"/>
</dbReference>
<dbReference type="Pfam" id="PF20907">
    <property type="entry name" value="Flav_NS3-hel_C"/>
    <property type="match status" value="1"/>
</dbReference>
<dbReference type="Pfam" id="PF07652">
    <property type="entry name" value="Flavi_DEAD"/>
    <property type="match status" value="1"/>
</dbReference>
<dbReference type="Pfam" id="PF00271">
    <property type="entry name" value="Helicase_C"/>
    <property type="match status" value="1"/>
</dbReference>
<dbReference type="Pfam" id="PF05550">
    <property type="entry name" value="Peptidase_C53"/>
    <property type="match status" value="1"/>
</dbReference>
<dbReference type="Pfam" id="PF12387">
    <property type="entry name" value="Peptidase_C74"/>
    <property type="match status" value="1"/>
</dbReference>
<dbReference type="Pfam" id="PF05578">
    <property type="entry name" value="Peptidase_S31"/>
    <property type="match status" value="1"/>
</dbReference>
<dbReference type="Pfam" id="PF16329">
    <property type="entry name" value="Pestivirus_E2"/>
    <property type="match status" value="1"/>
</dbReference>
<dbReference type="Pfam" id="PF00998">
    <property type="entry name" value="RdRP_3"/>
    <property type="match status" value="1"/>
</dbReference>
<dbReference type="PRINTS" id="PR00729">
    <property type="entry name" value="CDVENDOPTASE"/>
</dbReference>
<dbReference type="SMART" id="SM00487">
    <property type="entry name" value="DEXDc"/>
    <property type="match status" value="1"/>
</dbReference>
<dbReference type="SMART" id="SM00490">
    <property type="entry name" value="HELICc"/>
    <property type="match status" value="1"/>
</dbReference>
<dbReference type="SUPFAM" id="SSF56672">
    <property type="entry name" value="DNA/RNA polymerases"/>
    <property type="match status" value="1"/>
</dbReference>
<dbReference type="SUPFAM" id="SSF52540">
    <property type="entry name" value="P-loop containing nucleoside triphosphate hydrolases"/>
    <property type="match status" value="1"/>
</dbReference>
<dbReference type="SUPFAM" id="SSF55895">
    <property type="entry name" value="Ribonuclease Rh-like"/>
    <property type="match status" value="1"/>
</dbReference>
<dbReference type="PROSITE" id="PS51192">
    <property type="entry name" value="HELICASE_ATP_BIND_1"/>
    <property type="match status" value="1"/>
</dbReference>
<dbReference type="PROSITE" id="PS51194">
    <property type="entry name" value="HELICASE_CTER"/>
    <property type="match status" value="1"/>
</dbReference>
<dbReference type="PROSITE" id="PS51692">
    <property type="entry name" value="PESTIVIRUS_NS2_PRO"/>
    <property type="match status" value="1"/>
</dbReference>
<dbReference type="PROSITE" id="PS51535">
    <property type="entry name" value="PESTIVIRUS_NS3PRO"/>
    <property type="match status" value="1"/>
</dbReference>
<dbReference type="PROSITE" id="PS51876">
    <property type="entry name" value="PV_NPRO"/>
    <property type="match status" value="1"/>
</dbReference>
<dbReference type="PROSITE" id="PS50507">
    <property type="entry name" value="RDRP_SSRNA_POS"/>
    <property type="match status" value="1"/>
</dbReference>
<dbReference type="PROSITE" id="PS00531">
    <property type="entry name" value="RNASE_T2_2"/>
    <property type="match status" value="1"/>
</dbReference>
<feature type="chain" id="PRO_0000450893" description="Genome polyprotein">
    <location>
        <begin position="1"/>
        <end position="3898"/>
    </location>
</feature>
<feature type="chain" id="PRO_0000038050" description="N-terminal protease">
    <location>
        <begin position="1"/>
        <end position="168"/>
    </location>
</feature>
<feature type="chain" id="PRO_0000038051" description="Capsid protein C">
    <location>
        <begin position="169"/>
        <end position="267"/>
    </location>
</feature>
<feature type="chain" id="PRO_0000038052" description="E(rns) glycoprotein">
    <location>
        <begin position="268"/>
        <end position="494"/>
    </location>
</feature>
<feature type="chain" id="PRO_0000038053" description="Envelope glycoprotein E1">
    <location>
        <begin position="495"/>
        <end position="689"/>
    </location>
</feature>
<feature type="chain" id="PRO_0000038054" description="Envelope glycoprotein E2">
    <location>
        <begin position="690"/>
        <end position="1062"/>
    </location>
</feature>
<feature type="chain" id="PRO_0000038055" description="Viroporin p7" evidence="1">
    <location>
        <begin position="1063"/>
        <end position="1132"/>
    </location>
</feature>
<feature type="chain" id="PRO_0000038056" description="Non-structural protein 2-3" evidence="1">
    <location>
        <begin position="1133"/>
        <end position="2272"/>
    </location>
</feature>
<feature type="chain" id="PRO_0000349361" description="Cysteine protease NS2" evidence="12">
    <location>
        <begin position="1133"/>
        <end position="1589"/>
    </location>
</feature>
<feature type="chain" id="PRO_0000038057" description="Serine protease NS3" evidence="1">
    <location>
        <begin position="1590"/>
        <end position="2272"/>
    </location>
</feature>
<feature type="chain" id="PRO_0000038058" description="Non-structural protein 4A" evidence="1">
    <location>
        <begin position="2273"/>
        <end position="2336"/>
    </location>
</feature>
<feature type="chain" id="PRO_0000038059" description="Non-structural protein 4B" evidence="1">
    <location>
        <begin position="2337"/>
        <end position="2683"/>
    </location>
</feature>
<feature type="chain" id="PRO_0000038060" description="Non-structural protein 5A" evidence="1">
    <location>
        <begin position="2684"/>
        <end position="3180"/>
    </location>
</feature>
<feature type="chain" id="PRO_0000038061" description="RNA-directed RNA polymerase" evidence="1">
    <location>
        <begin position="3181"/>
        <end position="3898"/>
    </location>
</feature>
<feature type="transmembrane region" description="Helical" evidence="7">
    <location>
        <begin position="1031"/>
        <end position="1051"/>
    </location>
</feature>
<feature type="transmembrane region" description="Helical" evidence="7">
    <location>
        <begin position="1070"/>
        <end position="1090"/>
    </location>
</feature>
<feature type="transmembrane region" description="Helical" evidence="7">
    <location>
        <begin position="1104"/>
        <end position="1124"/>
    </location>
</feature>
<feature type="transmembrane region" description="Helical" evidence="12">
    <location>
        <begin position="1140"/>
        <end position="1164"/>
    </location>
</feature>
<feature type="transmembrane region" description="Helical" evidence="12">
    <location>
        <begin position="1189"/>
        <end position="1209"/>
    </location>
</feature>
<feature type="transmembrane region" description="Helical" evidence="12">
    <location>
        <begin position="1217"/>
        <end position="1237"/>
    </location>
</feature>
<feature type="transmembrane region" description="Helical" evidence="12">
    <location>
        <begin position="1247"/>
        <end position="1267"/>
    </location>
</feature>
<feature type="transmembrane region" description="Helical" evidence="12">
    <location>
        <begin position="1281"/>
        <end position="1301"/>
    </location>
</feature>
<feature type="transmembrane region" description="Helical" evidence="12">
    <location>
        <begin position="1360"/>
        <end position="1380"/>
    </location>
</feature>
<feature type="transmembrane region" description="Helical" evidence="12">
    <location>
        <begin position="1568"/>
        <end position="1588"/>
    </location>
</feature>
<feature type="domain" description="Peptidase C53" evidence="13">
    <location>
        <begin position="1"/>
        <end position="168"/>
    </location>
</feature>
<feature type="domain" description="Peptidase C74" evidence="12">
    <location>
        <begin position="1441"/>
        <end position="1589"/>
    </location>
</feature>
<feature type="domain" description="Peptidase S31" evidence="11">
    <location>
        <begin position="1590"/>
        <end position="1763"/>
    </location>
</feature>
<feature type="domain" description="Helicase ATP-binding" evidence="9">
    <location>
        <begin position="1802"/>
        <end position="1960"/>
    </location>
</feature>
<feature type="domain" description="Helicase C-terminal" evidence="10">
    <location>
        <begin position="1978"/>
        <end position="2179"/>
    </location>
</feature>
<feature type="domain" description="RdRp catalytic" evidence="8">
    <location>
        <begin position="3519"/>
        <end position="3642"/>
    </location>
</feature>
<feature type="region of interest" description="Disordered" evidence="14">
    <location>
        <begin position="32"/>
        <end position="54"/>
    </location>
</feature>
<feature type="region of interest" description="Zinc-binding TRASH domain" evidence="24">
    <location>
        <begin position="112"/>
        <end position="138"/>
    </location>
</feature>
<feature type="region of interest" description="Disordered" evidence="14">
    <location>
        <begin position="170"/>
        <end position="206"/>
    </location>
</feature>
<feature type="region of interest" description="Disordered" evidence="14">
    <location>
        <begin position="221"/>
        <end position="242"/>
    </location>
</feature>
<feature type="short sequence motif" description="DEAH box" evidence="9">
    <location>
        <begin position="1910"/>
        <end position="1913"/>
    </location>
</feature>
<feature type="compositionally biased region" description="Basic and acidic residues" evidence="14">
    <location>
        <begin position="176"/>
        <end position="185"/>
    </location>
</feature>
<feature type="compositionally biased region" description="Basic and acidic residues" evidence="14">
    <location>
        <begin position="192"/>
        <end position="204"/>
    </location>
</feature>
<feature type="active site" description="For N-terminal protease activity" evidence="53">
    <location>
        <position position="22"/>
    </location>
</feature>
<feature type="active site" description="For N-terminal protease activity" evidence="13 47">
    <location>
        <position position="49"/>
    </location>
</feature>
<feature type="active site" description="For N-terminal protease activity" evidence="13 31 47">
    <location>
        <position position="69"/>
    </location>
</feature>
<feature type="active site" description="For cysteine protease NS2 activity" evidence="12">
    <location>
        <position position="1447"/>
    </location>
</feature>
<feature type="active site" description="For cysteine protease NS2 activity" evidence="12">
    <location>
        <position position="1461"/>
    </location>
</feature>
<feature type="active site" description="For cysteine protease NS2 activity" evidence="12">
    <location>
        <position position="1512"/>
    </location>
</feature>
<feature type="active site" description="Charge relay system; for serine protease NS3 activity" evidence="11">
    <location>
        <position position="1658"/>
    </location>
</feature>
<feature type="active site" description="Charge relay system; for serine protease NS3 activity" evidence="11">
    <location>
        <position position="1695"/>
    </location>
</feature>
<feature type="active site" description="Charge relay system; for serine protease NS3 activity" evidence="11">
    <location>
        <position position="1752"/>
    </location>
</feature>
<feature type="binding site" evidence="9">
    <location>
        <begin position="1815"/>
        <end position="1822"/>
    </location>
    <ligand>
        <name>ATP</name>
        <dbReference type="ChEBI" id="CHEBI:30616"/>
    </ligand>
</feature>
<feature type="binding site" evidence="3">
    <location>
        <position position="3500"/>
    </location>
    <ligand>
        <name>GTP</name>
        <dbReference type="ChEBI" id="CHEBI:37565"/>
    </ligand>
</feature>
<feature type="binding site" evidence="3">
    <location>
        <position position="3502"/>
    </location>
    <ligand>
        <name>GTP</name>
        <dbReference type="ChEBI" id="CHEBI:37565"/>
    </ligand>
</feature>
<feature type="binding site" evidence="3">
    <location>
        <position position="3697"/>
    </location>
    <ligand>
        <name>GTP</name>
        <dbReference type="ChEBI" id="CHEBI:37565"/>
    </ligand>
</feature>
<feature type="binding site" evidence="3">
    <location>
        <position position="3705"/>
    </location>
    <ligand>
        <name>GTP</name>
        <dbReference type="ChEBI" id="CHEBI:37565"/>
    </ligand>
</feature>
<feature type="site" description="Cleavage; by autolysis" evidence="13">
    <location>
        <begin position="168"/>
        <end position="169"/>
    </location>
</feature>
<feature type="site" description="Cleavage; by host signal peptidase" evidence="46">
    <location>
        <begin position="267"/>
        <end position="268"/>
    </location>
</feature>
<feature type="site" description="Hydrogen donor to release the cleavage products of E(rns) glycoprotein RNase activity" evidence="5">
    <location>
        <position position="297"/>
    </location>
</feature>
<feature type="site" description="Cleavage" evidence="46">
    <location>
        <begin position="494"/>
        <end position="495"/>
    </location>
</feature>
<feature type="site" description="Cleavage; by host signal peptidase" evidence="46">
    <location>
        <begin position="689"/>
        <end position="690"/>
    </location>
</feature>
<feature type="site" description="Serves as pH sensor to control fusion" evidence="3">
    <location>
        <position position="759"/>
    </location>
</feature>
<feature type="site" description="Cleavage; by host signal peptidase; partial" evidence="1">
    <location>
        <begin position="1062"/>
        <end position="1063"/>
    </location>
</feature>
<feature type="site" description="Cleavage; by host signal peptidase" evidence="1">
    <location>
        <begin position="1132"/>
        <end position="1133"/>
    </location>
</feature>
<feature type="site" description="Cleavage; partial; cysteine protease NS2" evidence="12">
    <location>
        <begin position="1589"/>
        <end position="1590"/>
    </location>
</feature>
<feature type="site" description="Cleavage; by serine protease NS3" evidence="1">
    <location>
        <begin position="2272"/>
        <end position="2273"/>
    </location>
</feature>
<feature type="site" description="Cleavage; by serine protease NS3" evidence="1">
    <location>
        <begin position="2336"/>
        <end position="2337"/>
    </location>
</feature>
<feature type="site" description="Cleavage; by serine protease NS3" evidence="1">
    <location>
        <begin position="2683"/>
        <end position="2684"/>
    </location>
</feature>
<feature type="site" description="Cleavage; by serine protease NS3" evidence="1">
    <location>
        <begin position="3180"/>
        <end position="3181"/>
    </location>
</feature>
<feature type="glycosylation site" description="N-linked (GlcNAc...) asparagine; by host" evidence="7">
    <location>
        <position position="157"/>
    </location>
</feature>
<feature type="glycosylation site" description="N-linked (GlcNAc...) asparagine; by host" evidence="7">
    <location>
        <position position="269"/>
    </location>
</feature>
<feature type="glycosylation site" description="N-linked (GlcNAc...) asparagine; by host" evidence="7">
    <location>
        <position position="274"/>
    </location>
</feature>
<feature type="glycosylation site" description="N-linked (GlcNAc...) asparagine; by host" evidence="7">
    <location>
        <position position="278"/>
    </location>
</feature>
<feature type="glycosylation site" description="N-linked (GlcNAc...) asparagine; by host" evidence="7">
    <location>
        <position position="293"/>
    </location>
</feature>
<feature type="glycosylation site" description="N-linked (GlcNAc...) asparagine; by host" evidence="7">
    <location>
        <position position="332"/>
    </location>
</feature>
<feature type="glycosylation site" description="N-linked (GlcNAc...) asparagine; by host" evidence="7">
    <location>
        <position position="362"/>
    </location>
</feature>
<feature type="glycosylation site" description="N-linked (GlcNAc...) asparagine; by host" evidence="7">
    <location>
        <position position="367"/>
    </location>
</feature>
<feature type="glycosylation site" description="N-linked (GlcNAc...) asparagine; by host" evidence="7">
    <location>
        <position position="410"/>
    </location>
</feature>
<feature type="glycosylation site" description="N-linked (GlcNAc...) asparagine; by host" evidence="7">
    <location>
        <position position="425"/>
    </location>
</feature>
<feature type="glycosylation site" description="N-linked (GlcNAc...) asparagine; by host" evidence="7">
    <location>
        <position position="500"/>
    </location>
</feature>
<feature type="glycosylation site" description="N-linked (GlcNAc...) asparagine; by host" evidence="7">
    <location>
        <position position="594"/>
    </location>
</feature>
<feature type="glycosylation site" description="N-linked (GlcNAc...) asparagine; by host" evidence="7">
    <location>
        <position position="805"/>
    </location>
</feature>
<feature type="glycosylation site" description="N-linked (GlcNAc...) asparagine; by host" evidence="7">
    <location>
        <position position="810"/>
    </location>
</feature>
<feature type="glycosylation site" description="N-linked (GlcNAc...) asparagine; by host" evidence="7">
    <location>
        <position position="874"/>
    </location>
</feature>
<feature type="glycosylation site" description="N-linked (GlcNAc...) asparagine; by host" evidence="7">
    <location>
        <position position="918"/>
    </location>
</feature>
<feature type="glycosylation site" description="N-linked (GlcNAc...) asparagine; by host" evidence="7">
    <location>
        <position position="949"/>
    </location>
</feature>
<feature type="glycosylation site" description="N-linked (GlcNAc...) asparagine; by host" evidence="7">
    <location>
        <position position="986"/>
    </location>
</feature>
<feature type="glycosylation site" description="N-linked (GlcNAc...) asparagine; by host" evidence="7">
    <location>
        <position position="1713"/>
    </location>
</feature>
<feature type="glycosylation site" description="N-linked (GlcNAc...) asparagine; by host" evidence="7">
    <location>
        <position position="2134"/>
    </location>
</feature>
<feature type="glycosylation site" description="N-linked (GlcNAc...) asparagine; by host" evidence="7">
    <location>
        <position position="2217"/>
    </location>
</feature>
<feature type="glycosylation site" description="N-linked (GlcNAc...) asparagine; by host" evidence="7">
    <location>
        <position position="2494"/>
    </location>
</feature>
<feature type="glycosylation site" description="N-linked (GlcNAc...) asparagine; by host" evidence="7">
    <location>
        <position position="2787"/>
    </location>
</feature>
<feature type="glycosylation site" description="N-linked (GlcNAc...) asparagine; by host" evidence="7">
    <location>
        <position position="2815"/>
    </location>
</feature>
<feature type="glycosylation site" description="N-linked (GlcNAc...) asparagine; by host" evidence="7">
    <location>
        <position position="2891"/>
    </location>
</feature>
<feature type="glycosylation site" description="N-linked (GlcNAc...) asparagine; by host" evidence="7">
    <location>
        <position position="3211"/>
    </location>
</feature>
<feature type="glycosylation site" description="N-linked (GlcNAc...) asparagine; by host" evidence="7">
    <location>
        <position position="3316"/>
    </location>
</feature>
<feature type="glycosylation site" description="N-linked (GlcNAc...) asparagine; by host" evidence="7">
    <location>
        <position position="3689"/>
    </location>
</feature>
<feature type="glycosylation site" description="N-linked (GlcNAc...) asparagine; by host" evidence="7">
    <location>
        <position position="3698"/>
    </location>
</feature>
<feature type="glycosylation site" description="N-linked (GlcNAc...) asparagine; by host" evidence="7">
    <location>
        <position position="3794"/>
    </location>
</feature>
<feature type="disulfide bond" evidence="5">
    <location>
        <begin position="305"/>
        <end position="349"/>
    </location>
</feature>
<feature type="disulfide bond" evidence="5">
    <location>
        <begin position="335"/>
        <end position="336"/>
    </location>
</feature>
<feature type="disulfide bond" evidence="5">
    <location>
        <begin position="377"/>
        <end position="422"/>
    </location>
</feature>
<feature type="disulfide bond" evidence="5">
    <location>
        <begin position="381"/>
        <end position="405"/>
    </location>
</feature>
<feature type="disulfide bond" description="Interchain" evidence="52">
    <location>
        <position position="438"/>
    </location>
</feature>
<feature type="disulfide bond" evidence="3">
    <location>
        <begin position="693"/>
        <end position="737"/>
    </location>
</feature>
<feature type="disulfide bond" description="Interchain" evidence="3">
    <location>
        <position position="983"/>
    </location>
</feature>
<feature type="sequence variant">
    <original>T</original>
    <variation>A</variation>
    <location>
        <position position="387"/>
    </location>
</feature>
<feature type="sequence variant">
    <original>R</original>
    <variation>S</variation>
    <location>
        <position position="3542"/>
    </location>
</feature>
<feature type="mutagenesis site" description="Almost complete loss of cleavage between N-pro and C." evidence="47">
    <original>E</original>
    <variation>V</variation>
    <location>
        <position position="22"/>
    </location>
</feature>
<feature type="mutagenesis site" description="No effect." evidence="47">
    <original>H</original>
    <variation>L</variation>
    <location>
        <position position="40"/>
    </location>
</feature>
<feature type="mutagenesis site" description="Complete loss of cleavage between N-pro and C." evidence="47">
    <original>H</original>
    <variation>L</variation>
    <location>
        <position position="49"/>
    </location>
</feature>
<feature type="mutagenesis site" description="Complete loss of cleavage between N-pro and C." evidence="47">
    <original>C</original>
    <variation>A</variation>
    <variation>S</variation>
    <location>
        <position position="69"/>
    </location>
</feature>
<feature type="mutagenesis site" description="No effect." evidence="47">
    <original>H</original>
    <variation>L</variation>
    <location>
        <position position="99"/>
    </location>
</feature>
<feature type="mutagenesis site" description="86% loss of zinc-binding by N-terminal protease. Complete loss of interaction with host IRF3. No effect on N-terminal protease enzymatic activity." evidence="24 47">
    <original>C</original>
    <variation>A</variation>
    <location>
        <position position="112"/>
    </location>
</feature>
<feature type="mutagenesis site" description="Almost complete loss of zinc-binding by N-terminal protease." evidence="21 24">
    <original>C</original>
    <variation>R</variation>
    <location>
        <position position="112"/>
    </location>
</feature>
<feature type="mutagenesis site" description="No effect on N-terminal protease enzymatic activity." evidence="47">
    <original>C</original>
    <variation>S</variation>
    <location>
        <position position="112"/>
    </location>
</feature>
<feature type="mutagenesis site" description="No effect on N-terminal protease enzymatic activity." evidence="47">
    <original>H</original>
    <variation>L</variation>
    <location>
        <position position="130"/>
    </location>
</feature>
<feature type="mutagenesis site" description="Almost complete loss of zinc-binding by N-terminal protease. Complete loss of interaction with host IRF3. No effect on N-terminal protease enzymatic activity." evidence="24 47">
    <original>C</original>
    <variation>A</variation>
    <location>
        <position position="134"/>
    </location>
</feature>
<feature type="mutagenesis site" description="No effect on N-terminal protease enzymatic activity." evidence="47">
    <original>C</original>
    <variation>S</variation>
    <location>
        <position position="134"/>
    </location>
</feature>
<feature type="mutagenesis site" description="74% loss of zinc-binding by N-terminal protease." evidence="21 24">
    <original>D</original>
    <variation>N</variation>
    <location>
        <position position="136"/>
    </location>
</feature>
<feature type="mutagenesis site" description="Almost complete loss of zinc-binding by N-terminal protease. Complete loss of interaction with host IRF3. No effect on N-terminal protease enzymatic activity." evidence="24 47">
    <original>C</original>
    <variation>A</variation>
    <location>
        <position position="138"/>
    </location>
</feature>
<feature type="mutagenesis site" description="No effect on N-terminal protease enzymatic activity." evidence="47">
    <original>C</original>
    <variation>S</variation>
    <location>
        <position position="138"/>
    </location>
</feature>
<feature type="mutagenesis site" description="40% loss of zinc-binding by N-terminal protease. No effect on N-terminal protease enzymatic activity." evidence="24 47">
    <original>C</original>
    <variation>A</variation>
    <location>
        <position position="161"/>
    </location>
</feature>
<feature type="mutagenesis site" description="No effect." evidence="47">
    <original>C</original>
    <variation>S</variation>
    <location>
        <position position="161"/>
    </location>
</feature>
<feature type="mutagenesis site" description="Complete loss of E(rns) glycoprotein dimerization. Virus shows attenuated phenotype." evidence="23">
    <original>C</original>
    <variation>F</variation>
    <variation>S</variation>
    <location>
        <position position="438"/>
    </location>
</feature>
<feature type="strand" evidence="64">
    <location>
        <begin position="1592"/>
        <end position="1602"/>
    </location>
</feature>
<feature type="helix" evidence="64">
    <location>
        <begin position="1607"/>
        <end position="1614"/>
    </location>
</feature>
<feature type="strand" evidence="64">
    <location>
        <begin position="1632"/>
        <end position="1639"/>
    </location>
</feature>
<feature type="strand" evidence="64">
    <location>
        <begin position="1642"/>
        <end position="1649"/>
    </location>
</feature>
<feature type="strand" evidence="64">
    <location>
        <begin position="1652"/>
        <end position="1655"/>
    </location>
</feature>
<feature type="helix" evidence="64">
    <location>
        <begin position="1657"/>
        <end position="1660"/>
    </location>
</feature>
<feature type="strand" evidence="64">
    <location>
        <begin position="1665"/>
        <end position="1669"/>
    </location>
</feature>
<feature type="strand" evidence="64">
    <location>
        <begin position="1672"/>
        <end position="1676"/>
    </location>
</feature>
<feature type="strand" evidence="64">
    <location>
        <begin position="1680"/>
        <end position="1682"/>
    </location>
</feature>
<feature type="turn" evidence="64">
    <location>
        <begin position="1683"/>
        <end position="1686"/>
    </location>
</feature>
<feature type="strand" evidence="64">
    <location>
        <begin position="1687"/>
        <end position="1691"/>
    </location>
</feature>
<feature type="strand" evidence="64">
    <location>
        <begin position="1703"/>
        <end position="1712"/>
    </location>
</feature>
<feature type="strand" evidence="64">
    <location>
        <begin position="1718"/>
        <end position="1727"/>
    </location>
</feature>
<feature type="strand" evidence="64">
    <location>
        <begin position="1730"/>
        <end position="1734"/>
    </location>
</feature>
<feature type="helix" evidence="64">
    <location>
        <begin position="1745"/>
        <end position="1748"/>
    </location>
</feature>
<feature type="strand" evidence="64">
    <location>
        <begin position="1755"/>
        <end position="1758"/>
    </location>
</feature>
<feature type="turn" evidence="64">
    <location>
        <begin position="1759"/>
        <end position="1761"/>
    </location>
</feature>
<feature type="strand" evidence="64">
    <location>
        <begin position="1764"/>
        <end position="1767"/>
    </location>
</feature>
<feature type="strand" evidence="64">
    <location>
        <begin position="1770"/>
        <end position="1777"/>
    </location>
</feature>
<feature type="strand" evidence="64">
    <location>
        <begin position="1780"/>
        <end position="1782"/>
    </location>
</feature>
<feature type="helix" evidence="61">
    <location>
        <begin position="1792"/>
        <end position="1803"/>
    </location>
</feature>
<feature type="strand" evidence="61">
    <location>
        <begin position="1810"/>
        <end position="1814"/>
    </location>
</feature>
<feature type="strand" evidence="61">
    <location>
        <begin position="1817"/>
        <end position="1819"/>
    </location>
</feature>
<feature type="strand" evidence="61">
    <location>
        <begin position="1821"/>
        <end position="1823"/>
    </location>
</feature>
<feature type="helix" evidence="61">
    <location>
        <begin position="1824"/>
        <end position="1833"/>
    </location>
</feature>
<feature type="strand" evidence="61">
    <location>
        <begin position="1839"/>
        <end position="1845"/>
    </location>
</feature>
<feature type="helix" evidence="61">
    <location>
        <begin position="1846"/>
        <end position="1859"/>
    </location>
</feature>
<feature type="strand" evidence="61">
    <location>
        <begin position="1865"/>
        <end position="1871"/>
    </location>
</feature>
<feature type="strand" evidence="61">
    <location>
        <begin position="1880"/>
        <end position="1885"/>
    </location>
</feature>
<feature type="helix" evidence="61">
    <location>
        <begin position="1886"/>
        <end position="1889"/>
    </location>
</feature>
<feature type="helix" evidence="61">
    <location>
        <begin position="1894"/>
        <end position="1901"/>
    </location>
</feature>
<feature type="strand" evidence="61">
    <location>
        <begin position="1905"/>
        <end position="1910"/>
    </location>
</feature>
<feature type="helix" evidence="61">
    <location>
        <begin position="1912"/>
        <end position="1914"/>
    </location>
</feature>
<feature type="helix" evidence="61">
    <location>
        <begin position="1917"/>
        <end position="1927"/>
    </location>
</feature>
<feature type="helix" evidence="61">
    <location>
        <begin position="1928"/>
        <end position="1932"/>
    </location>
</feature>
<feature type="strand" evidence="61">
    <location>
        <begin position="1935"/>
        <end position="1939"/>
    </location>
</feature>
<feature type="strand" evidence="61">
    <location>
        <begin position="1956"/>
        <end position="1958"/>
    </location>
</feature>
<feature type="turn" evidence="63">
    <location>
        <begin position="1970"/>
        <end position="1972"/>
    </location>
</feature>
<feature type="strand" evidence="60">
    <location>
        <begin position="1973"/>
        <end position="1976"/>
    </location>
</feature>
<feature type="strand" evidence="60">
    <location>
        <begin position="1979"/>
        <end position="1982"/>
    </location>
</feature>
<feature type="helix" evidence="60">
    <location>
        <begin position="1983"/>
        <end position="1987"/>
    </location>
</feature>
<feature type="strand" evidence="60">
    <location>
        <begin position="1990"/>
        <end position="1993"/>
    </location>
</feature>
<feature type="helix" evidence="60">
    <location>
        <begin position="1997"/>
        <end position="2009"/>
    </location>
</feature>
<feature type="strand" evidence="60">
    <location>
        <begin position="2014"/>
        <end position="2017"/>
    </location>
</feature>
<feature type="helix" evidence="60">
    <location>
        <begin position="2024"/>
        <end position="2030"/>
    </location>
</feature>
<feature type="strand" evidence="60">
    <location>
        <begin position="2032"/>
        <end position="2034"/>
    </location>
</feature>
<feature type="strand" evidence="60">
    <location>
        <begin position="2036"/>
        <end position="2041"/>
    </location>
</feature>
<feature type="helix" evidence="62">
    <location>
        <begin position="2042"/>
        <end position="2045"/>
    </location>
</feature>
<feature type="strand" evidence="60">
    <location>
        <begin position="2054"/>
        <end position="2057"/>
    </location>
</feature>
<feature type="strand" evidence="61">
    <location>
        <begin position="2061"/>
        <end position="2068"/>
    </location>
</feature>
<feature type="strand" evidence="61">
    <location>
        <begin position="2070"/>
        <end position="2073"/>
    </location>
</feature>
<feature type="strand" evidence="61">
    <location>
        <begin position="2075"/>
        <end position="2082"/>
    </location>
</feature>
<feature type="helix" evidence="61">
    <location>
        <begin position="2086"/>
        <end position="2093"/>
    </location>
</feature>
<feature type="strand" evidence="61">
    <location>
        <begin position="2096"/>
        <end position="2100"/>
    </location>
</feature>
<feature type="strand" evidence="61">
    <location>
        <begin position="2103"/>
        <end position="2105"/>
    </location>
</feature>
<feature type="strand" evidence="60">
    <location>
        <begin position="2112"/>
        <end position="2114"/>
    </location>
</feature>
<feature type="helix" evidence="61">
    <location>
        <begin position="2118"/>
        <end position="2124"/>
    </location>
</feature>
<feature type="helix" evidence="61">
    <location>
        <begin position="2125"/>
        <end position="2128"/>
    </location>
</feature>
<feature type="turn" evidence="61">
    <location>
        <begin position="2129"/>
        <end position="2132"/>
    </location>
</feature>
<feature type="helix" evidence="61">
    <location>
        <begin position="2135"/>
        <end position="2146"/>
    </location>
</feature>
<feature type="helix" evidence="61">
    <location>
        <begin position="2153"/>
        <end position="2166"/>
    </location>
</feature>
<feature type="helix" evidence="61">
    <location>
        <begin position="2173"/>
        <end position="2181"/>
    </location>
</feature>
<feature type="helix" evidence="61">
    <location>
        <begin position="2188"/>
        <end position="2193"/>
    </location>
</feature>
<feature type="turn" evidence="61">
    <location>
        <begin position="2194"/>
        <end position="2196"/>
    </location>
</feature>
<feature type="strand" evidence="61">
    <location>
        <begin position="2204"/>
        <end position="2207"/>
    </location>
</feature>
<feature type="strand" evidence="61">
    <location>
        <begin position="2210"/>
        <end position="2215"/>
    </location>
</feature>
<feature type="strand" evidence="61">
    <location>
        <begin position="2234"/>
        <end position="2237"/>
    </location>
</feature>
<feature type="helix" evidence="61">
    <location>
        <begin position="2238"/>
        <end position="2246"/>
    </location>
</feature>
<feature type="helix" evidence="61">
    <location>
        <begin position="2257"/>
        <end position="2270"/>
    </location>
</feature>
<feature type="helix" evidence="61">
    <location>
        <begin position="2272"/>
        <end position="2275"/>
    </location>
</feature>
<feature type="strand" evidence="64">
    <location>
        <begin position="2276"/>
        <end position="2279"/>
    </location>
</feature>
<feature type="strand" evidence="64">
    <location>
        <begin position="2298"/>
        <end position="2312"/>
    </location>
</feature>
<feature type="helix" evidence="64">
    <location>
        <begin position="2315"/>
        <end position="2317"/>
    </location>
</feature>
<organism>
    <name type="scientific">Classical swine fever virus (strain Alfort/Tuebingen)</name>
    <name type="common">CSFV</name>
    <name type="synonym">Hog cholera virus</name>
    <dbReference type="NCBI Taxonomy" id="358805"/>
    <lineage>
        <taxon>Viruses</taxon>
        <taxon>Riboviria</taxon>
        <taxon>Orthornavirae</taxon>
        <taxon>Kitrinoviricota</taxon>
        <taxon>Flasuviricetes</taxon>
        <taxon>Amarillovirales</taxon>
        <taxon>Flaviviridae</taxon>
        <taxon>Pestivirus</taxon>
        <taxon>Pestivirus suis</taxon>
    </lineage>
</organism>
<protein>
    <recommendedName>
        <fullName>Genome polyprotein</fullName>
    </recommendedName>
    <component>
        <recommendedName>
            <fullName>N-terminal protease</fullName>
            <shortName>N-pro</shortName>
            <ecNumber>3.4.22.-</ecNumber>
        </recommendedName>
        <alternativeName>
            <fullName>Autoprotease p20</fullName>
        </alternativeName>
    </component>
    <component>
        <recommendedName>
            <fullName>Capsid protein C</fullName>
        </recommendedName>
        <alternativeName>
            <fullName>Core protein</fullName>
        </alternativeName>
    </component>
    <component>
        <recommendedName>
            <fullName>E(rns) glycoprotein</fullName>
        </recommendedName>
        <alternativeName>
            <fullName>gp44/48</fullName>
        </alternativeName>
    </component>
    <component>
        <recommendedName>
            <fullName>Envelope glycoprotein E1</fullName>
        </recommendedName>
        <alternativeName>
            <fullName>gp33</fullName>
        </alternativeName>
    </component>
    <component>
        <recommendedName>
            <fullName>Envelope glycoprotein E2</fullName>
        </recommendedName>
        <alternativeName>
            <fullName>gp55</fullName>
        </alternativeName>
    </component>
    <component>
        <recommendedName>
            <fullName evidence="50">Viroporin p7</fullName>
        </recommendedName>
    </component>
    <component>
        <recommendedName>
            <fullName>Non-structural protein 2-3</fullName>
            <shortName>NS2-3</shortName>
        </recommendedName>
    </component>
    <component>
        <recommendedName>
            <fullName>Cysteine protease NS2</fullName>
            <ecNumber>3.4.22.-</ecNumber>
        </recommendedName>
        <alternativeName>
            <fullName>Non-structural protein 2</fullName>
        </alternativeName>
    </component>
    <component>
        <recommendedName>
            <fullName>Serine protease NS3</fullName>
            <ecNumber>3.4.21.113</ecNumber>
            <ecNumber>3.6.1.15</ecNumber>
            <ecNumber>3.6.4.13</ecNumber>
        </recommendedName>
        <alternativeName>
            <fullName>Non-structural protein 3</fullName>
        </alternativeName>
    </component>
    <component>
        <recommendedName>
            <fullName>Non-structural protein 4A</fullName>
            <shortName>NS4A</shortName>
        </recommendedName>
    </component>
    <component>
        <recommendedName>
            <fullName>Non-structural protein 4B</fullName>
            <shortName>NS4B</shortName>
        </recommendedName>
    </component>
    <component>
        <recommendedName>
            <fullName>Non-structural protein 5A</fullName>
            <shortName>NS5A</shortName>
        </recommendedName>
    </component>
    <component>
        <recommendedName>
            <fullName>RNA-directed RNA polymerase</fullName>
            <ecNumber>2.7.7.48</ecNumber>
        </recommendedName>
        <alternativeName>
            <fullName>NS5B</fullName>
        </alternativeName>
    </component>
</protein>
<keyword id="KW-0002">3D-structure</keyword>
<keyword id="KW-1072">Activation of host autophagy by virus</keyword>
<keyword id="KW-0067">ATP-binding</keyword>
<keyword id="KW-0903">Direct protein sequencing</keyword>
<keyword id="KW-1015">Disulfide bond</keyword>
<keyword id="KW-1170">Fusion of virus membrane with host endosomal membrane</keyword>
<keyword id="KW-1168">Fusion of virus membrane with host membrane</keyword>
<keyword id="KW-0325">Glycoprotein</keyword>
<keyword id="KW-0342">GTP-binding</keyword>
<keyword id="KW-0347">Helicase</keyword>
<keyword id="KW-1032">Host cell membrane</keyword>
<keyword id="KW-1035">Host cytoplasm</keyword>
<keyword id="KW-1043">Host membrane</keyword>
<keyword id="KW-0945">Host-virus interaction</keyword>
<keyword id="KW-0378">Hydrolase</keyword>
<keyword id="KW-1090">Inhibition of host innate immune response by virus</keyword>
<keyword id="KW-1092">Inhibition of host IRF3 by virus</keyword>
<keyword id="KW-1113">Inhibition of host RLR pathway by virus</keyword>
<keyword id="KW-0407">Ion channel</keyword>
<keyword id="KW-0406">Ion transport</keyword>
<keyword id="KW-0472">Membrane</keyword>
<keyword id="KW-0540">Nuclease</keyword>
<keyword id="KW-0547">Nucleotide-binding</keyword>
<keyword id="KW-0548">Nucleotidyltransferase</keyword>
<keyword id="KW-0645">Protease</keyword>
<keyword id="KW-0696">RNA-directed RNA polymerase</keyword>
<keyword id="KW-0720">Serine protease</keyword>
<keyword id="KW-0788">Thiol protease</keyword>
<keyword id="KW-0808">Transferase</keyword>
<keyword id="KW-0812">Transmembrane</keyword>
<keyword id="KW-1133">Transmembrane helix</keyword>
<keyword id="KW-0813">Transport</keyword>
<keyword id="KW-1161">Viral attachment to host cell</keyword>
<keyword id="KW-1234">Viral attachment to host entry receptor</keyword>
<keyword id="KW-0899">Viral immunoevasion</keyword>
<keyword id="KW-1182">Viral ion channel</keyword>
<keyword id="KW-1162">Viral penetration into host cytoplasm</keyword>
<keyword id="KW-0693">Viral RNA replication</keyword>
<keyword id="KW-0946">Virion</keyword>
<keyword id="KW-1160">Virus entry into host cell</keyword>
<accession>P19712</accession>
<reference key="1">
    <citation type="journal article" date="1989" name="Virology">
        <title>Molecular cloning and nucleotide sequence of the genome of hog cholera virus.</title>
        <authorList>
            <person name="Meyers G."/>
            <person name="Ruemenapf T."/>
            <person name="Thiel H.-J."/>
        </authorList>
    </citation>
    <scope>NUCLEOTIDE SEQUENCE [GENOMIC RNA]</scope>
</reference>
<reference key="2">
    <citation type="submission" date="1999-08" db="EMBL/GenBank/DDBJ databases">
        <authorList>
            <person name="Meyers G."/>
        </authorList>
    </citation>
    <scope>SEQUENCE REVISION TO 2731</scope>
</reference>
<reference key="3">
    <citation type="journal article" date="1993" name="J. Virol.">
        <title>Processing of the envelope glycoproteins of pestiviruses.</title>
        <authorList>
            <person name="Ruemenapf T."/>
            <person name="Unger G."/>
            <person name="Strauss J.H."/>
            <person name="Thiel H.-J."/>
        </authorList>
    </citation>
    <scope>PROTEIN SEQUENCE OF 169-178; 268-291; 495-518 AND 690-713</scope>
    <scope>PROTEOLYTIC PROCESSING OF POLYPROTEIN (GENOME POLYPROTEIN)</scope>
</reference>
<reference key="4">
    <citation type="journal article" date="1990" name="J. Virol.">
        <title>Pestivirus glycoprotein which induces neutralizing antibodies forms part of a disulfide-linked heterodimer.</title>
        <authorList>
            <person name="Weiland E."/>
            <person name="Stark R."/>
            <person name="Haas B."/>
            <person name="Ruemenapf T."/>
            <person name="Meyers G."/>
            <person name="Thiel H.J."/>
        </authorList>
    </citation>
    <scope>SUBUNIT (ENVELOPE GLYCOPROTEIN E1)</scope>
    <scope>SUBUNIT (ENVELOPE GLYCOPROTEIN E2)</scope>
</reference>
<reference key="5">
    <citation type="journal article" date="1991" name="J. Virol.">
        <title>Hog cholera virus: molecular composition of virions from a pestivirus.</title>
        <authorList>
            <person name="Thiel H.-J."/>
            <person name="Stark R."/>
            <person name="Weiland E."/>
            <person name="Ruemenapf T."/>
            <person name="Meyers G."/>
        </authorList>
    </citation>
    <scope>SUBUNIT (E(RNS) GLYCOPROTEIN)</scope>
    <scope>GLYCOSYLATION (E(RNS) GLYCOPROTEIN)</scope>
</reference>
<reference key="6">
    <citation type="journal article" date="1993" name="J. Virol.">
        <title>Processing of pestivirus polyprotein: cleavage site between autoprotease and nucleocapsid protein of classical swine fever virus.</title>
        <authorList>
            <person name="Stark R."/>
            <person name="Meyers G."/>
            <person name="Ruemenapf T."/>
            <person name="Thiel H.-J."/>
        </authorList>
    </citation>
    <scope>PROTEOLYTIC PROCESSING (GENOME POLYPROTEIN)</scope>
</reference>
<reference key="7">
    <citation type="journal article" date="1993" name="Science">
        <title>Identification of a structural glycoprotein of an RNA virus as a ribonuclease.</title>
        <authorList>
            <person name="Schneider R."/>
            <person name="Unger G."/>
            <person name="Stark R."/>
            <person name="Schneider-Scherzer E."/>
            <person name="Thiel H.J."/>
        </authorList>
    </citation>
    <scope>FUNCTION (E(RNS) GLYCOPROTEIN)</scope>
</reference>
<reference key="8">
    <citation type="journal article" date="1998" name="J. Virol.">
        <title>N-terminal protease of pestiviruses: identification of putative catalytic residues by site-directed mutagenesis.</title>
        <authorList>
            <person name="Ruemenapf T."/>
            <person name="Stark R."/>
            <person name="Heimann M."/>
            <person name="Thiel H.-J."/>
        </authorList>
    </citation>
    <scope>ACTIVE SITE (N-TERMINAL PROTEASE)</scope>
    <scope>MUTAGENESIS OF GLU-22; HIS-40; HIS-49; CYS-69; HIS-99; CYS-112; HIS-130; CYS-134; CYS-138 AND CYS-161</scope>
</reference>
<reference key="9">
    <citation type="journal article" date="1998" name="J. Virol.">
        <title>Specific interaction of eukaryotic translation initiation factor 3 with the 5' nontranslated regions of hepatitis C virus and classical swine fever virus RNAs.</title>
        <authorList>
            <person name="Sizova D.V."/>
            <person name="Kolupaeva V.G."/>
            <person name="Pestova T.V."/>
            <person name="Shatsky I.N."/>
            <person name="Hellen C.U."/>
        </authorList>
    </citation>
    <scope>INDUCTION</scope>
</reference>
<reference key="10">
    <citation type="journal article" date="1998" name="Virus Res.">
        <title>The recombinant nucleocapsid protein of classical swine fever virus can act as a transcriptional regulator.</title>
        <authorList>
            <person name="Liu J.J."/>
            <person name="Wong M.L."/>
            <person name="Chang T.J."/>
        </authorList>
    </citation>
    <scope>FUNCTION (CAPSID PROTEIN C)</scope>
</reference>
<reference key="11">
    <citation type="journal article" date="1999" name="J. Gen. Virol.">
        <title>Localization of pestiviral envelope proteins E(rns) and E2 at the cell surface and on isolated particles.</title>
        <authorList>
            <person name="Weiland F."/>
            <person name="Weiland E."/>
            <person name="Unger G."/>
            <person name="Saalmuller A."/>
            <person name="Thiel H.-J."/>
        </authorList>
    </citation>
    <scope>SUBCELLULAR LOCATION (E(RNS) GLYCOPROTEIN)</scope>
    <scope>SUBCELLULAR LOCATION (ENVELOPE GLYCOPROTEIN E2)</scope>
</reference>
<reference key="12">
    <citation type="journal article" date="1999" name="J. Virol.">
        <title>Cytopathogenic and noncytopathogenic RNA replicons of classical swine fever virus.</title>
        <authorList>
            <person name="Moser C."/>
            <person name="Stettler P."/>
            <person name="Tratschin J.D."/>
            <person name="Hofmann M.A."/>
        </authorList>
    </citation>
    <scope>FUNCTION (ENVELOPE GLYCOPROTEIN E2)</scope>
</reference>
<reference key="13">
    <citation type="journal article" date="2004" name="Virology">
        <title>Characterization of classical swine fever virus entry by using pseudotyped viruses: E1 and E2 are sufficient to mediate viral entry.</title>
        <authorList>
            <person name="Wang Z."/>
            <person name="Nie Y."/>
            <person name="Wang P."/>
            <person name="Ding M."/>
            <person name="Deng H."/>
        </authorList>
    </citation>
    <scope>FUNCTION (ENVELOPE GLYCOPROTEIN E1)</scope>
    <scope>FUNCTION (ENVELOPE GLYCOPROTEIN E2)</scope>
</reference>
<reference key="14">
    <citation type="journal article" date="2004" name="J. Virol.">
        <title>Classical swine fever virus glycoprotein E rns is an endoribonuclease with an unusual base specificity.</title>
        <authorList>
            <person name="Hausmann Y."/>
            <person name="Roman-Sosa G."/>
            <person name="Thiel H.J."/>
            <person name="Ruemenapf T."/>
        </authorList>
    </citation>
    <scope>BIOPHYSICOCHEMICAL PROPERTIES (E(RNS) GLYCOPROTEIN)</scope>
    <scope>FUNCTION (E(RNS) GLYCOPROTEIN)</scope>
</reference>
<reference key="15">
    <citation type="journal article" date="2007" name="Virology">
        <title>Nonstructural proteins NS2-3 and NS4A of classical swine fever virus: essential features for infectious particle formation.</title>
        <authorList>
            <person name="Moulin H.R."/>
            <person name="Seuberlich T."/>
            <person name="Bauhofer O."/>
            <person name="Bennett L.C."/>
            <person name="Tratschin J.D."/>
            <person name="Hofmann M.A."/>
            <person name="Ruggli N."/>
        </authorList>
    </citation>
    <scope>FUNCTION (NON-STRUCTURAL PROTEIN 2-3)</scope>
    <scope>FUNCTION (NON-STRUCTURAL PROTEIN 4A)</scope>
</reference>
<reference key="16">
    <citation type="journal article" date="2007" name="J. Virol.">
        <title>Classical swine fever virus Npro interacts with interferon regulatory factor 3 and induces its proteasomal degradation.</title>
        <authorList>
            <person name="Bauhofer O."/>
            <person name="Summerfield A."/>
            <person name="Sakoda Y."/>
            <person name="Tratschin J.D."/>
            <person name="Hofmann M.A."/>
            <person name="Ruggli N."/>
        </authorList>
    </citation>
    <scope>FUNCTION (N-TERMINAL PROTEASE)</scope>
    <scope>INTERACTION WITH HOST IRF3 (N-TERMINAL PROTEASE)</scope>
    <scope>SUBCELLULAR LOCATION (N-TERMINAL PROTEASE)</scope>
</reference>
<reference key="17">
    <citation type="journal article" date="2009" name="J. Virol.">
        <title>Mutation of cysteine 171 of pestivirus E rns RNase prevents homodimer formation and leads to attenuation of classical swine fever virus.</title>
        <authorList>
            <person name="Tews B.A."/>
            <person name="Schuermann E.M."/>
            <person name="Meyers G."/>
        </authorList>
    </citation>
    <scope>FUNCTION (E(RNS) GLYCOPROTEIN)</scope>
    <scope>MUTAGENESIS OF CYS-438</scope>
    <scope>DISULFIDE BOND</scope>
</reference>
<reference key="18">
    <citation type="journal article" date="2009" name="Can. J. Microbiol.">
        <title>Classical swine fever virus Erns glycoprotein antagonizes induction of interferon-beta by double-stranded RNA.</title>
        <authorList>
            <person name="Luo X."/>
            <person name="Ling D."/>
            <person name="Li T."/>
            <person name="Wan C."/>
            <person name="Zhang C."/>
            <person name="Pan Z."/>
        </authorList>
    </citation>
    <scope>FUNCTION (E(RNS) GLYCOPROTEIN)</scope>
</reference>
<reference key="19">
    <citation type="journal article" date="2009" name="Virus Res.">
        <title>Characterization of classical swine fever virus (CSFV) nonstructural protein 3 (NS3) helicase activity and its modulation by CSFV RNA-dependent RNA polymerase.</title>
        <authorList>
            <person name="Wen G."/>
            <person name="Xue J."/>
            <person name="Shen Y."/>
            <person name="Zhang C."/>
            <person name="Pan Z."/>
        </authorList>
    </citation>
    <scope>FUNCTION (NON-STRUCTURAL PROTEIN 3)</scope>
    <scope>INTERACTION WITH RNA-DIRECTED RNA POLYMERASE (NON-STRUCTURAL PROTEIN 3)</scope>
    <scope>INTERACTION WITH NON-STRUCTURAL PROTEIN 3 (RNA-DIRECTED RNA POLYMERASE)</scope>
</reference>
<reference key="20">
    <citation type="journal article" date="2009" name="J. Virol.">
        <title>Classical swine fever virus can remain virulent after specific elimination of the interferon regulatory factor 3-degrading function of Npro.</title>
        <authorList>
            <person name="Ruggli N."/>
            <person name="Summerfield A."/>
            <person name="Fiebach A.R."/>
            <person name="Guzylack-Piriou L."/>
            <person name="Bauhofer O."/>
            <person name="Lamm C.G."/>
            <person name="Waltersperger S."/>
            <person name="Matsuno K."/>
            <person name="Liu L."/>
            <person name="Gerber M."/>
            <person name="Choi K.H."/>
            <person name="Hofmann M.A."/>
            <person name="Sakoda Y."/>
            <person name="Tratschin J.D."/>
        </authorList>
    </citation>
    <scope>MUTAGENESIS OF CYS-112 AND ASP-136</scope>
    <scope>INTERACTION WITH HOST IRF3 (N-TERMINAL PROTEASE)</scope>
</reference>
<reference key="21">
    <citation type="journal article" date="2009" name="J. Mol. Biol.">
        <title>Zinc binding in pestivirus N(pro) is required for interferon regulatory factor 3 interaction and degradation.</title>
        <authorList>
            <person name="Szymanski M.R."/>
            <person name="Fiebach A.R."/>
            <person name="Tratschin J.D."/>
            <person name="Gut M."/>
            <person name="Ramanujam V.M."/>
            <person name="Gottipati K."/>
            <person name="Patel P."/>
            <person name="Ye M."/>
            <person name="Ruggli N."/>
            <person name="Choi K.H."/>
        </authorList>
    </citation>
    <scope>FUNCTION (N-TERMINAL PROTEASE)</scope>
    <scope>INTERACTION WITH HOST IRF3 (N-TERMINAL PROTEASE)</scope>
    <scope>DOMAIN (N-TERMINAL PROTEASE)</scope>
    <scope>MUTAGENESIS OF CYS-112; CYS-134; ASP-136; CYS-138 AND CYS-161</scope>
</reference>
<reference key="22">
    <citation type="journal article" date="2012" name="Virus Res.">
        <title>Classical swine fever virus NS5A protein interacts with 3'-untranslated region and regulates viral RNA synthesis.</title>
        <authorList>
            <person name="Sheng C."/>
            <person name="Chen Y."/>
            <person name="Xiao J."/>
            <person name="Xiao J."/>
            <person name="Wang J."/>
            <person name="Li G."/>
            <person name="Chen J."/>
            <person name="Xiao M."/>
        </authorList>
    </citation>
    <scope>FUNCTION (NON-STRUCTURAL PROTEIN 5A)</scope>
</reference>
<reference key="23">
    <citation type="journal article" date="2012" name="Virology">
        <title>Classical swine fever virus NS5A regulates viral RNA replication through binding to NS5B and 3'UTR.</title>
        <authorList>
            <person name="Chen Y."/>
            <person name="Xiao J."/>
            <person name="Xiao J."/>
            <person name="Sheng C."/>
            <person name="Wang J."/>
            <person name="Jia L."/>
            <person name="Zhi Y."/>
            <person name="Li G."/>
            <person name="Chen J."/>
            <person name="Xiao M."/>
        </authorList>
    </citation>
    <scope>FUNCTION (NON-STRUCTURAL PROTEIN 5A)</scope>
    <scope>INTERACTION WITH RNA-DIRECTED RNA POLYMERASE (NON-STRUCTURAL PROTEIN 5A)</scope>
    <scope>INTERACTION WITH NON-STRUCTURAL PROTEIN 5A (RNA-DIRECTED RNA POLYMERASE)</scope>
</reference>
<reference key="24">
    <citation type="journal article" date="2012" name="J. Virol.">
        <title>Classical swine fever virus p7 protein is a viroporin involved in virulence in swine.</title>
        <authorList>
            <person name="Gladue D.P."/>
            <person name="Holinka L.G."/>
            <person name="Largo E."/>
            <person name="Fernandez Sainz I."/>
            <person name="Carrillo C."/>
            <person name="O'Donnell V."/>
            <person name="Baker-Branstetter R."/>
            <person name="Lu Z."/>
            <person name="Ambroggio X."/>
            <person name="Risatti G.R."/>
            <person name="Nieva J.L."/>
            <person name="Borca M.V."/>
        </authorList>
    </citation>
    <scope>FUNCTION (VIROPORIN P7)</scope>
</reference>
<reference key="25">
    <citation type="journal article" date="2014" name="Virology">
        <title>Autocatalytic activity and substrate specificity of the pestivirus N-terminal protease Npro.</title>
        <authorList>
            <person name="Gottipati K."/>
            <person name="Acholi S."/>
            <person name="Ruggli N."/>
            <person name="Choi K.H."/>
        </authorList>
    </citation>
    <scope>ACTIVE SITE (N-TERMINAL PROTEASE)</scope>
    <scope>FUNCTION (N-TERMINAL PROTEASE)</scope>
</reference>
<reference key="26">
    <citation type="journal article" date="2014" name="Virology">
        <title>Interaction of structural core protein of classical swine fever virus with endoplasmic reticulum-associated degradation pathway protein OS9.</title>
        <authorList>
            <person name="Gladue D.P."/>
            <person name="O'Donnell V."/>
            <person name="Fernandez-Sainz I.J."/>
            <person name="Fletcher P."/>
            <person name="Baker-Branstetter R."/>
            <person name="Holinka L.G."/>
            <person name="Sanford B."/>
            <person name="Carlson J."/>
            <person name="Lu Z."/>
            <person name="Borca M.V."/>
        </authorList>
    </citation>
    <scope>INTERACTION WITH HOST OS9 (CAPSID PROTEIN C)</scope>
</reference>
<reference key="27">
    <citation type="journal article" date="2014" name="Antiviral Res.">
        <title>Pore-forming activity of pestivirus p7 in a minimal model system supports genus-specific viroporin function.</title>
        <authorList>
            <person name="Largo E."/>
            <person name="Gladue D.P."/>
            <person name="Huarte N."/>
            <person name="Borca M.V."/>
            <person name="Nieva J.L."/>
        </authorList>
    </citation>
    <scope>FUNCTION (VIROPORIN P7)</scope>
</reference>
<reference key="28">
    <citation type="journal article" date="2015" name="J. Virol.">
        <title>Thioredoxin 2 Is a Novel E2-Interacting Protein That Inhibits the Replication of Classical Swine Fever Virus.</title>
        <authorList>
            <person name="Li S."/>
            <person name="Wang J."/>
            <person name="He W.R."/>
            <person name="Feng S."/>
            <person name="Li Y."/>
            <person name="Wang X."/>
            <person name="Liao Y."/>
            <person name="Qin H.Y."/>
            <person name="Li L.F."/>
            <person name="Dong H."/>
            <person name="Sun Y."/>
            <person name="Luo Y."/>
            <person name="Qiu H.J."/>
        </authorList>
    </citation>
    <scope>INTERACTION WITH HOST TRX2 (ENVELOPE GLYCOPROTEIN E2)</scope>
</reference>
<reference key="29">
    <citation type="journal article" date="2015" name="J. Virol.">
        <title>The laminin receptor is a cellular attachment receptor for classical Swine Fever virus.</title>
        <authorList>
            <person name="Chen J."/>
            <person name="He W.R."/>
            <person name="Shen L."/>
            <person name="Dong H."/>
            <person name="Yu J."/>
            <person name="Wang X."/>
            <person name="Yu S."/>
            <person name="Li Y."/>
            <person name="Li S."/>
            <person name="Luo Y."/>
            <person name="Sun Y."/>
            <person name="Qiu H.J."/>
        </authorList>
    </citation>
    <scope>INTERACTION WITH HOST RPSA (E(RNS) GLYCOPROTEIN)</scope>
    <scope>FUNCTION (E(RNS) GLYCOPROTEIN)</scope>
</reference>
<reference key="30">
    <citation type="journal article" date="2016" name="J. Virol.">
        <title>Pestivirus Npro Directly Interacts with Interferon Regulatory Factor 3 Monomer and Dimer.</title>
        <authorList>
            <person name="Gottipati K."/>
            <person name="Holthauzen L.M."/>
            <person name="Ruggli N."/>
            <person name="Choi K.H."/>
        </authorList>
    </citation>
    <scope>FUNCTION (N-TERMINAL PROTEASE)</scope>
    <scope>INTERACTION WITH HOST IRF3 (N-TERMINAL PROTEASE)</scope>
</reference>
<reference key="31">
    <citation type="journal article" date="2017" name="Sci. Rep.">
        <title>The core protein of a pestivirus protects the incoming virus against IFN-induced effectors.</title>
        <authorList>
            <person name="Riedel C."/>
            <person name="Lamp B."/>
            <person name="Hagen B."/>
            <person name="Indik S."/>
            <person name="Ruemenapf T."/>
        </authorList>
    </citation>
    <scope>FUNCTION (CAPSID PROTEIN C)</scope>
    <scope>SUBCELLULAR LOCATION (CAPSID PROTEIN C)</scope>
</reference>
<reference key="32">
    <citation type="journal article" date="2017" name="Sci. Rep.">
        <title>TRAF6 is a novel NS3-interacting protein that inhibits classical swine fever virus replication.</title>
        <authorList>
            <person name="Lv H."/>
            <person name="Dong W."/>
            <person name="Cao Z."/>
            <person name="Li X."/>
            <person name="Wang J."/>
            <person name="Qian G."/>
            <person name="Lv Q."/>
            <person name="Wang C."/>
            <person name="Guo K."/>
            <person name="Zhang Y."/>
        </authorList>
    </citation>
    <scope>FUNCTION (NON-STRUCTURAL PROTEIN 3)</scope>
    <scope>INTERACTION WITH HOST TRAF6 (NON-STRUCTURAL PROTEIN 3)</scope>
    <source>
        <strain>Shimen</strain>
    </source>
</reference>
<reference key="33">
    <citation type="journal article" date="2017" name="Front. Microbiol.">
        <title>Rab5 Enhances Classical Swine Fever Virus Proliferation and Interacts with Viral NS4B Protein to Facilitate Formation of NS4B Related Complex.</title>
        <authorList>
            <person name="Lin J."/>
            <person name="Wang C."/>
            <person name="Zhang L."/>
            <person name="Wang T."/>
            <person name="Zhang J."/>
            <person name="Liang W."/>
            <person name="Li C."/>
            <person name="Qian G."/>
            <person name="Ouyang Y."/>
            <person name="Guo K."/>
            <person name="Zhang Y."/>
        </authorList>
    </citation>
    <scope>FUNCTION (NON-STRUCTURAL PROTEIN 4B)</scope>
    <scope>INTERACTION WITH HOST RAB5 (NON-STRUCTURAL PROTEIN 4B)</scope>
    <scope>SUBCELLULAR LOCATION (NON-STRUCTURAL PROTEIN 4B)</scope>
    <scope>SUBCELLULAR LOCATION (SERINE PROTEASE NS3)</scope>
    <scope>SUBCELLULAR LOCATION (NON-STRUCTURAL PROTEIN 5A)</scope>
</reference>
<reference key="34">
    <citation type="journal article" date="2018" name="J. Gen. Virol.">
        <title>dimerization via pseudoreversion partially restores virulence of classical swine fever virus.</title>
        <authorList>
            <person name="Tucakov A.K."/>
            <person name="Yavuz S."/>
            <person name="Schuermann E.M."/>
            <person name="Mischler M."/>
            <person name="Klingebeil A."/>
            <person name="Meyers G."/>
        </authorList>
    </citation>
    <scope>FUNCTION (E(RNS) GLYCOPROTEIN)</scope>
    <scope>SUBUNIT (E(RNS) GLYCOPROTEIN)</scope>
</reference>
<reference key="35">
    <citation type="journal article" date="2018" name="Sci. Rep.">
        <title>FHC, an NS4B-interacting Protein, Enhances Classical Swine Fever Virus Propagation and Acts Positively in Viral Anti-apoptosis.</title>
        <authorList>
            <person name="Qian G."/>
            <person name="Lv H."/>
            <person name="Lin J."/>
            <person name="Li X."/>
            <person name="Lv Q."/>
            <person name="Wang T."/>
            <person name="Zhang J."/>
            <person name="Dong W."/>
            <person name="Guo K."/>
            <person name="Zhang Y."/>
        </authorList>
    </citation>
    <scope>FUNCTION (NON-STRUCTURAL PROTEIN 4B)</scope>
    <scope>INTERACTION WITH HOST FTH1 (NON-STRUCTURAL PROTEIN 4B)</scope>
    <scope>SUBCELLULAR LOCATION (NON-STRUCTURAL PROTEIN 4B)</scope>
</reference>
<reference key="36">
    <citation type="journal article" date="2020" name="J. Med. Virol.">
        <title>Viperin inhibits classical swine fever virus replication by interacting with viral nonstructural 5A protein.</title>
        <authorList>
            <person name="Xu C."/>
            <person name="Feng L."/>
            <person name="Chen P."/>
            <person name="Li A."/>
            <person name="Guo S."/>
            <person name="Jiao X."/>
            <person name="Zhang C."/>
            <person name="Zhao Y."/>
            <person name="Jin X."/>
            <person name="Zhong K."/>
            <person name="Guo Y."/>
            <person name="Zhu H."/>
            <person name="Han L."/>
            <person name="Yang G."/>
            <person name="Li H."/>
            <person name="Wang Y."/>
        </authorList>
    </citation>
    <scope>INTERACTION WITH HOST RSAD2 (NON-STRUCTURAL PROTEIN 5A)</scope>
</reference>
<reference key="37">
    <citation type="journal article" date="2021" name="PLoS Pathog.">
        <title>ADAM17 is an essential attachment factor for classical swine fever virus.</title>
        <authorList>
            <person name="Yuan F."/>
            <person name="Li D."/>
            <person name="Li C."/>
            <person name="Zhang Y."/>
            <person name="Song H."/>
            <person name="Li S."/>
            <person name="Deng H."/>
            <person name="Gao G.F."/>
            <person name="Zheng A."/>
        </authorList>
    </citation>
    <scope>FUNCTION (ENVELOPE GLYCOPROTEIN E2)</scope>
    <scope>INTERACTION WITH HOST ADAM17 (ENVELOPE GLYCOPROTEIN E2)</scope>
</reference>
<reference key="38">
    <citation type="journal article" date="2023" name="J. Virol.">
        <title>N-terminal domain of classical swine fever virus Npro induces proteasomal degradation of specificity protein 1 with reduced HDAC1 expression to evade from innate immune responses.</title>
        <authorList>
            <person name="Chen R."/>
            <person name="Han X."/>
            <person name="Xu H."/>
            <person name="Xu J."/>
            <person name="Cao T."/>
            <person name="Shan Y."/>
            <person name="He F."/>
            <person name="Fang W."/>
            <person name="Li X."/>
        </authorList>
    </citation>
    <scope>FUNCTION (N-TERMINAL PROTEASE)</scope>
    <scope>INTERACTION WITH HOST SP1 (N-TERMINAL PROTEASE)</scope>
    <source>
        <strain>Shimen</strain>
    </source>
</reference>
<reference evidence="54 55 56 57 58" key="39">
    <citation type="journal article" date="2015" name="J. Virol.">
        <title>X-ray structure of the pestivirus NS3 helicase and its conformation in solution.</title>
        <authorList>
            <person name="Tortorici M.A."/>
            <person name="Duquerroy S."/>
            <person name="Kwok J."/>
            <person name="Vonrhein C."/>
            <person name="Perez J."/>
            <person name="Lamp B."/>
            <person name="Bricogne G."/>
            <person name="Ruemenapf T."/>
            <person name="Vachette P."/>
            <person name="Rey F.A."/>
        </authorList>
    </citation>
    <scope>X-RAY CRYSTALLOGRAPHY (2.51 ANGSTROMS) OF 1782-2280</scope>
</reference>
<reference evidence="59" key="40">
    <citation type="journal article" date="2017" name="PLoS Pathog.">
        <title>A positive-strand RNA virus uses alternative protein-protein interactions within a viral protease/cofactor complex to switch between RNA replication and virion morphogenesis.</title>
        <authorList>
            <person name="Dubrau D."/>
            <person name="Tortorici M.A."/>
            <person name="Rey F.A."/>
            <person name="Tautz N."/>
        </authorList>
    </citation>
    <scope>X-RAY CRYSTALLOGRAPHY (3.05 ANGSTROMS) OF 1590-2280</scope>
    <scope>INTERACTION WITH NS4A (SERINE PROTEASE NS3)</scope>
</reference>
<sequence>MELNHFELLYKTSKQKPVGVEEPVYDTAGRPLFGNPSEVHPQSTLKLPHDRGRGDIRTTLRDLPRKGDCRSGNHLGPVSGIYIKPGPVYYQDYTGPVYHRAPLEFFDEAQFCEVTKRIGRVTGSDGKLYHIYVCVDGCILLKLAKRGTPRTLKWIRNFTNCPLWVTSCSDDGASGSKDKKPDRMNKGKLKIAPREHEKDSKTKPPDATIVVEGVKYQIKKKGKVKGKNTQDGLYHNKNKPPESRKKLEKALLAWAVITILLYQPVAAENITQWNLSDNGTNGIQRAMYLRGVNRSLHGIWPEKICKGVPTHLATDTELKEIRGMMDASERTNYTCCRLQRHEWNKHGWCNWYNIDPWIQLMNRTQTNLTEGPPDKECAVTCRYDKNTDVNVVTQARNRPTTLTGCKKGKNFSFAGTVIEGPCNFNVSVEDILYGDHECGSLLQDTALYLLDGMTNTIENARQGAARVTSWLGRQLSTAGKKLERRSKTWFGAYALSPYCNVTRKIGYIWYTNNCTPACLPKNTKIIGPGKFDTNAEDGKILHEMGGHLSEFLLLSLVILSDFAPETASTLYLILHYAIPQSHEEPEGCDTNQLNLTVKLRTEDVVPSSVWNIGKYVCVRPDWWPYETKVALLFEEAGQVIKLVLRALRDLTRVWNSASTTAFLICLIKVLRGQVVQGIIWLLLVTGAQGRLACKEDYRYAISSTNEIGLLGAEGLTTTWKEYSHGLQLDDGTVKAVCTAGSFKVTALNVVSRRYLASLHKRALPTSVTFELLFDGTNPAIEEMDDDFGFGLCPFDTSPVIKGKYNTTLLNGSAFYLVCPIGWTGVVECTAVSPTTLRTEVVKTFRRDKPFPHRVDCVTTIVEKEDLFHCKLGGNWTCVKGDPVTYKGGQVKQCRWCGFEFKEPYGLPHYPIGKCILTNETGYRVVDSTDCNRDGVVISTEGEHECLIGNTTVKVHALDERLGPMPCRPKEIVSSEGPVRKTSCTFNYTKTLRNKYYEPRDSYFQQYMLKGEYQYWFNLDVTDHHTDYFAEFVVLVVVALLGGRYVLWLIVTYIILTEQLAAGLQLGQGEVVLIGNLITHTDNEVVVYFLLLYLVIRDEPIKKWILLLFHAMTNNPVKTITVALLMISGVAKGGKIDGGWQRQPVTSFDIQLALAVVVVVVMLLAKRDPTTFPLVITVATLRTAKITNGFSTDLVIATVSAALLTWTYISDYYKYKTWLQYLVSTVTGIFLIRVLKGIGELDLHAPTLPSHRPLFYILVYLISTAVVTRWNLDVAGLLLQCVPTLLMVFTMWADILTLILILPTYELTKLYYLKEVKIGAERGWLWKTNYKRVNDIYEVDQTSEGVYLFPSKQRTSAITSTMLPLIKAILISCISNKWQLIYLLYLIFEVSYYLHKKVIDEIAGGTNFVSRLVAALIEVNWAFDNEEVKGLKKFFLLSSRVKELIIKHKVRNEVVVRWFGDEEIYGMPKLIGLVKAATLSRNKHCMLCTVCEDRDWRGETCPKCGRFGPPVVCGMTLADFEEKHYKRIFIREDQSGGPLREEHAGYLQYKARGQLFLRNLPVLATKVKMLLVGNLGTEIGDLEHLGWVLRGPAVCKKVTEHERCTTSIMDKLTAFFGVMPRGTTPRAPVRFPTSLLKIRRGLETGWAYTHQGGISSVDHVTCGKDLLVCDTMGRTRVVCQSNNKMTDESEYGVKTDSGCPEGARCYVFNPEAVNISGTKGAMVHLQKTGGEFTCVTASGTPAFFDLKNLKGWSGLPIFEASSGRVVGRVKVGKNEDSKPTKLMSGIQTVSKSATDLTEMVKKITTMNRGEFRQITLATGAGKTTELPRSVIEEIGRHKRVLVLIPLRAAAESVYQYMRQKHPSIAFNLRIGEMKEGDMATGITYASYGYFCQMSQPKLRAAMVEYSFIFLDEYHCATPEQLAIMGKIHRFSENLRVVAMTATPAGTVTTTGQKHPIEEFIAPEVMKGEDLGSEYLDIAGLKIPVEEMKNNMLVFVPTRNMAVEAAKKLKAKGYNSGYYYSGEDPSNLRVVTSQSPYVVVATNAIESGVTLPDLDVVVDTGLKCEKRIRLSPKMPFIVTGLKRMAVTIGEQAQRRGRVGRVKPGRYYRSQETPVGSKDYHYDLLQAQRYGIEDGINITKSFREMNYDWSLYEEDSLMITQLEILNNLLISEELPMAVKNIMARTDHPEPIQLAYNSYETQVPVLFPKIRNGEVTDTYDNYTFLNARKLGDDVPPYVYATEDEDLAVELLGLDWPDPGNQGTVEAGRALKQVVGLSTAENALLVALFGYVGYQALSKRHIPVVTDIYSVEDHRLEDTTHLQYAPNAIKTEGKETELKELAQGDVQRCVEAVTNYAREGIQFMKSQALKVRETPTYKETMNTVADYVKKFIEALTDSKEDIIKYGLWGAHTALYKSIGARLGHETAFATLVVKWLAFGGESISDHIKQAATDLVVYYIINRPQFPGDTETQQEGRKFVASLLVSALATYTYKSWNYNNLSKIVEPALATLPYAAKALKLFAPTRLESVVILSTAIYKTYLSIRRGKSDGLLGTGVSAAMEIMSQNPVSVGIAVMLGVGAVAAHNAIEASEQKRTLLMKVFVKNFLDQAATDELVKESPEKIIMALFEAVQTVGNPLRLVYHLYGVFYKGWEAKELAQRTAGRNLFTLIMFEAVELLGVDSEGKIRQLSSNYILELLYKFRDNIKSSVREIAISWAPAPFSCDWTPTDDRIGLPHENYLRVETKCPCGYRMKAVKNCAGELRLLEEGGSFLCRNKFGRGSQNYRVTKYYDDNLSEIKPVIRMEGHVELYYKGATIKLDFNNSKTVLATDKWEVDHSTLVRALKRYTGAGYRGAYLGEKPNHKHLIQRDCATITKDKVCFIKMKRGCAFTYDLSLHNLTRLIELVHKNNLEDREIPAVTVTTWLAYTFVNEDIGTIKPTFGEKVTPEKQEEVVLQPAVVVDTTDVAVTVVGETSTMTTGETPTTFTSLGSDSKVRQVLKLGVDDGQYPGPNQQRASLLEAIQGVDERPSVLILGSDKATSNRVKTAKNVKIYRSRDPLELREMMKRGKILVVALSRVDTALLKFVDYKGTFLTRETLEALSLGKPKKRDITKAEAQWLLRLEDQIEELPDWFAAKEPIFLEANIKRDKYHLVGDIATIKEKAKQLGATDSTKISKEVGAKVYSMKLSNWVIQEENKQGSLAPLFEELLQQCPPGGQNKTTHMVSAYQLAQGNWVPVSCHVFMGTIPARRTKTHPYEAYVKLRELVDEHKMKALCGGSGLSKHNEWVIGKVKYQGNLRTKHMLNPGKVAEQLHREGYRHNVYNKTIGSVMTATGIRLEKLPVVRAQTDTTNFHQAIRDKIDKEENLQTPGLHKKLMEVFNALKRPELEASYDAVDWEELERGINRKGAAGFFERKNIGEVLDSEKNKVEEVIDSLKKGRNIRYYETAIPKNEKRDVNDDWTAGDFVDEKKPRVIQYPEAKTRLAITKVMYKWVKQKPVVIPGYEGKTPLFQIFDKVKKEWDQFQNPVAVSFDTKAWDTQVTTRDLELIRDIQKFYFKKKWHKFIDTLTKHMSEVPVISADGEVYIRKGQRGSGQPDTSAGNSMLNVLTMVYAFCEATGVPYKSFDRVAKIHVCGDDGFLITERALGEKFASKGVQILYEAGKPQKITEGDKMKVAYQFDDIEFCSHTPVQVRWSDNTSSYMPGRNTTTILAKMATRLDSSGERGTIAYEKAVAFSFLLMYSWNPLIRRICLLVLSTELQVRPGKSTTYYYEGDPISAYKEVIGHNLFDLKRTSFEKLAKLNLSMSTLGVWTRHTSKRLLQDCVNVGTKEGNWLVNADRLVSSKTGNRYIPGEGHTLQGKHYEELILARKPIGNFEGTDRYNLGPIVNVVLRRLKIMMMALIGRGV</sequence>
<evidence type="ECO:0000250" key="1"/>
<evidence type="ECO:0000250" key="2">
    <source>
        <dbReference type="UniProtKB" id="O56125"/>
    </source>
</evidence>
<evidence type="ECO:0000250" key="3">
    <source>
        <dbReference type="UniProtKB" id="P19711"/>
    </source>
</evidence>
<evidence type="ECO:0000250" key="4">
    <source>
        <dbReference type="UniProtKB" id="P21530"/>
    </source>
</evidence>
<evidence type="ECO:0000250" key="5">
    <source>
        <dbReference type="UniProtKB" id="Q96662"/>
    </source>
</evidence>
<evidence type="ECO:0000250" key="6">
    <source>
        <dbReference type="UniProtKB" id="Q9Q6P4"/>
    </source>
</evidence>
<evidence type="ECO:0000255" key="7"/>
<evidence type="ECO:0000255" key="8">
    <source>
        <dbReference type="PROSITE-ProRule" id="PRU00539"/>
    </source>
</evidence>
<evidence type="ECO:0000255" key="9">
    <source>
        <dbReference type="PROSITE-ProRule" id="PRU00541"/>
    </source>
</evidence>
<evidence type="ECO:0000255" key="10">
    <source>
        <dbReference type="PROSITE-ProRule" id="PRU00542"/>
    </source>
</evidence>
<evidence type="ECO:0000255" key="11">
    <source>
        <dbReference type="PROSITE-ProRule" id="PRU00868"/>
    </source>
</evidence>
<evidence type="ECO:0000255" key="12">
    <source>
        <dbReference type="PROSITE-ProRule" id="PRU01029"/>
    </source>
</evidence>
<evidence type="ECO:0000255" key="13">
    <source>
        <dbReference type="PROSITE-ProRule" id="PRU01224"/>
    </source>
</evidence>
<evidence type="ECO:0000256" key="14">
    <source>
        <dbReference type="SAM" id="MobiDB-lite"/>
    </source>
</evidence>
<evidence type="ECO:0000269" key="15">
    <source>
    </source>
</evidence>
<evidence type="ECO:0000269" key="16">
    <source>
    </source>
</evidence>
<evidence type="ECO:0000269" key="17">
    <source>
    </source>
</evidence>
<evidence type="ECO:0000269" key="18">
    <source>
    </source>
</evidence>
<evidence type="ECO:0000269" key="19">
    <source>
    </source>
</evidence>
<evidence type="ECO:0000269" key="20">
    <source>
    </source>
</evidence>
<evidence type="ECO:0000269" key="21">
    <source>
    </source>
</evidence>
<evidence type="ECO:0000269" key="22">
    <source>
    </source>
</evidence>
<evidence type="ECO:0000269" key="23">
    <source>
    </source>
</evidence>
<evidence type="ECO:0000269" key="24">
    <source>
    </source>
</evidence>
<evidence type="ECO:0000269" key="25">
    <source>
    </source>
</evidence>
<evidence type="ECO:0000269" key="26">
    <source>
    </source>
</evidence>
<evidence type="ECO:0000269" key="27">
    <source>
    </source>
</evidence>
<evidence type="ECO:0000269" key="28">
    <source>
    </source>
</evidence>
<evidence type="ECO:0000269" key="29">
    <source>
    </source>
</evidence>
<evidence type="ECO:0000269" key="30">
    <source>
    </source>
</evidence>
<evidence type="ECO:0000269" key="31">
    <source>
    </source>
</evidence>
<evidence type="ECO:0000269" key="32">
    <source>
    </source>
</evidence>
<evidence type="ECO:0000269" key="33">
    <source>
    </source>
</evidence>
<evidence type="ECO:0000269" key="34">
    <source>
    </source>
</evidence>
<evidence type="ECO:0000269" key="35">
    <source>
    </source>
</evidence>
<evidence type="ECO:0000269" key="36">
    <source>
    </source>
</evidence>
<evidence type="ECO:0000269" key="37">
    <source>
    </source>
</evidence>
<evidence type="ECO:0000269" key="38">
    <source>
    </source>
</evidence>
<evidence type="ECO:0000269" key="39">
    <source>
    </source>
</evidence>
<evidence type="ECO:0000269" key="40">
    <source>
    </source>
</evidence>
<evidence type="ECO:0000269" key="41">
    <source>
    </source>
</evidence>
<evidence type="ECO:0000269" key="42">
    <source>
    </source>
</evidence>
<evidence type="ECO:0000269" key="43">
    <source>
    </source>
</evidence>
<evidence type="ECO:0000269" key="44">
    <source>
    </source>
</evidence>
<evidence type="ECO:0000269" key="45">
    <source>
    </source>
</evidence>
<evidence type="ECO:0000269" key="46">
    <source>
    </source>
</evidence>
<evidence type="ECO:0000269" key="47">
    <source>
    </source>
</evidence>
<evidence type="ECO:0000269" key="48">
    <source>
    </source>
</evidence>
<evidence type="ECO:0000269" key="49">
    <source>
    </source>
</evidence>
<evidence type="ECO:0000303" key="50">
    <source>
    </source>
</evidence>
<evidence type="ECO:0000305" key="51"/>
<evidence type="ECO:0000305" key="52">
    <source>
    </source>
</evidence>
<evidence type="ECO:0000305" key="53">
    <source>
    </source>
</evidence>
<evidence type="ECO:0007744" key="54">
    <source>
        <dbReference type="PDB" id="4CBG"/>
    </source>
</evidence>
<evidence type="ECO:0007744" key="55">
    <source>
        <dbReference type="PDB" id="4CBH"/>
    </source>
</evidence>
<evidence type="ECO:0007744" key="56">
    <source>
        <dbReference type="PDB" id="4CBI"/>
    </source>
</evidence>
<evidence type="ECO:0007744" key="57">
    <source>
        <dbReference type="PDB" id="4CBL"/>
    </source>
</evidence>
<evidence type="ECO:0007744" key="58">
    <source>
        <dbReference type="PDB" id="4CBM"/>
    </source>
</evidence>
<evidence type="ECO:0007744" key="59">
    <source>
        <dbReference type="PDB" id="5MZ4"/>
    </source>
</evidence>
<evidence type="ECO:0007829" key="60">
    <source>
        <dbReference type="PDB" id="4CBG"/>
    </source>
</evidence>
<evidence type="ECO:0007829" key="61">
    <source>
        <dbReference type="PDB" id="4CBH"/>
    </source>
</evidence>
<evidence type="ECO:0007829" key="62">
    <source>
        <dbReference type="PDB" id="4CBI"/>
    </source>
</evidence>
<evidence type="ECO:0007829" key="63">
    <source>
        <dbReference type="PDB" id="4CBL"/>
    </source>
</evidence>
<evidence type="ECO:0007829" key="64">
    <source>
        <dbReference type="PDB" id="5MZ4"/>
    </source>
</evidence>
<name>POLG_CSFAT</name>
<comment type="function">
    <molecule>N-terminal protease</molecule>
    <text evidence="18 24 31 35">Leader cysteine autoprotease that cleaves itself from the nascent polyprotein during translation of the viral mRNA. Once released, plays a role in the inhibition of host innate immune response by interacting with host IRF3 and inducing its proteasomal degradation.</text>
</comment>
<comment type="function">
    <molecule>Capsid protein C</molecule>
    <text evidence="36 49">Packages viral RNA to form a viral nucleocapsid and thereby protects viral RNA. Also plays a role in transcription regulation. Protects the incoming virus against IFN-induced effectors.</text>
</comment>
<comment type="function">
    <molecule>E(rns) glycoprotein</molecule>
    <text evidence="4 16 23 25 33 39 45">Plays a role in viral entry. Interacts with host RPSA that acts as a cellular attachment receptor for the virus. Also possesses intrinsic ribonuclease (RNase) activity that can inhibit the production of type I interferon and assist in the development of persistent infections. Cleaves preferentially NpU bonds (PubMed:15113930). Binds to heparan sulfate on the host cells for entry (By similarity).</text>
</comment>
<comment type="function">
    <molecule>Envelope glycoprotein E1</molecule>
    <text evidence="17">Plays a role in cell attachment and subsequent fusion of viral and cellular membranes. Therefore, mediates together with envelope glycoprotein E2 the viral entry.</text>
</comment>
<comment type="function">
    <molecule>Envelope glycoprotein E2</molecule>
    <text evidence="4 17 42">Plays a role in cell attachment and subsequent fusion of viral and cellular membranes (PubMed:15527858). Therefore, mediates together with envelope glycoprotein E1 the viral entry (PubMed:15527858). Binds to host ADAM17 receptor for entry (PubMed:33684175). Binds to host ANXA2 for entry (By similarity). Binds to host MERTK for entry (By similarity).</text>
</comment>
<comment type="function">
    <molecule>Viroporin p7</molecule>
    <text evidence="27 30">Plays an essential role in the virus replication cycle by acting as a viroporin. Forms ion conductive pores, which alters the cell permeability allowing the transport of ions and other small molecules.</text>
</comment>
<comment type="function">
    <molecule>Non-structural protein 2-3</molecule>
    <text evidence="19">Autoprotease that associates with the host chaperone JIV and cleaves the NS2-3 protein between NS2 and NS3. Also plays a role in the formation of infectious particles.</text>
</comment>
<comment type="function">
    <molecule>Cysteine protease NS2</molecule>
    <text evidence="15">Plays a role in the regulation of viral RNA replication.</text>
</comment>
<comment type="function">
    <molecule>Serine protease NS3</molecule>
    <text evidence="22 37">Multifunctional protein that contains an N-terminal protease and a C-terminal helicase, playing essential roles in viral polyprotein processing and viral genome replication. The chymotrypsin-like serine protease activity utilizes NS4A as an essential cofactor and catalyzes the cleavage of the polyprotein leading to the release of NS4A, NS4B, NS5A, and NS5B. Plays a role in the inhibition of host NF-kappa-B activation by interacting with and inhibiting host TRAF6. Interacts with NS5B to enhance RNA-dependent RNA polymerase activity.</text>
</comment>
<comment type="function">
    <molecule>Non-structural protein 4A</molecule>
    <text evidence="19">Acts as a cofactor for the NS3 protease activity.</text>
</comment>
<comment type="function">
    <molecule>Non-structural protein 4B</molecule>
    <text evidence="2 6 40">Induces a specific membrane alteration that serves as a scaffold for the virus replication complex (By similarity). Antagonizes host cell apoptosis by interacting with host ferritin heavy chain. The ORF4 protein physically binds host FTH1/FHC, resulting in the reduction of FTH1 protein levels in host cells. Reduction of FTH1 concentration further inhibits the accumulation of reactive oxygen in host cells, leading to reduced apoptosis (By similarity) (PubMed:29844394).</text>
</comment>
<comment type="function">
    <molecule>Non-structural protein 5A</molecule>
    <text evidence="26 28">Regulates viral RNA replication by interacting with the 3'-untranslated region of viral RNA in a dose-dependent manner. At small concentrations promotes viral synthesis by interacting with the polymerase NS5B while at large concentrations, inhibits replication.</text>
</comment>
<comment type="function">
    <molecule>RNA-directed RNA polymerase</molecule>
    <text evidence="8">Replicates the viral (+) and (-) genome.</text>
</comment>
<comment type="catalytic activity">
    <molecule>Serine protease NS3</molecule>
    <reaction>
        <text>Leu is conserved at position P1 for all four cleavage sites. Alanine is found at position P1' of the NS4A-NS4B cleavage site, whereas serine is found at position P1' of the NS3-NS4A, NS4B-NS5A and NS5A-NS5B cleavage sites.</text>
        <dbReference type="EC" id="3.4.21.113"/>
    </reaction>
</comment>
<comment type="catalytic activity">
    <molecule>RNA-directed RNA polymerase</molecule>
    <reaction evidence="8">
        <text>RNA(n) + a ribonucleoside 5'-triphosphate = RNA(n+1) + diphosphate</text>
        <dbReference type="Rhea" id="RHEA:21248"/>
        <dbReference type="Rhea" id="RHEA-COMP:14527"/>
        <dbReference type="Rhea" id="RHEA-COMP:17342"/>
        <dbReference type="ChEBI" id="CHEBI:33019"/>
        <dbReference type="ChEBI" id="CHEBI:61557"/>
        <dbReference type="ChEBI" id="CHEBI:140395"/>
        <dbReference type="EC" id="2.7.7.48"/>
    </reaction>
</comment>
<comment type="catalytic activity">
    <molecule>Serine protease NS3</molecule>
    <reaction>
        <text>a ribonucleoside 5'-triphosphate + H2O = a ribonucleoside 5'-diphosphate + phosphate + H(+)</text>
        <dbReference type="Rhea" id="RHEA:23680"/>
        <dbReference type="ChEBI" id="CHEBI:15377"/>
        <dbReference type="ChEBI" id="CHEBI:15378"/>
        <dbReference type="ChEBI" id="CHEBI:43474"/>
        <dbReference type="ChEBI" id="CHEBI:57930"/>
        <dbReference type="ChEBI" id="CHEBI:61557"/>
        <dbReference type="EC" id="3.6.1.15"/>
    </reaction>
</comment>
<comment type="catalytic activity">
    <molecule>Serine protease NS3</molecule>
    <reaction>
        <text>ATP + H2O = ADP + phosphate + H(+)</text>
        <dbReference type="Rhea" id="RHEA:13065"/>
        <dbReference type="ChEBI" id="CHEBI:15377"/>
        <dbReference type="ChEBI" id="CHEBI:15378"/>
        <dbReference type="ChEBI" id="CHEBI:30616"/>
        <dbReference type="ChEBI" id="CHEBI:43474"/>
        <dbReference type="ChEBI" id="CHEBI:456216"/>
        <dbReference type="EC" id="3.6.4.13"/>
    </reaction>
</comment>
<comment type="biophysicochemical properties">
    <kinetics>
        <KM evidence="16">84 uM for Sub-UpU</KM>
        <KM evidence="16">103 uM for Sub-GpU</KM>
        <KM evidence="16">220 uM for Sub-CpU</KM>
        <KM evidence="16">259 uM for Sub-ApU</KM>
    </kinetics>
</comment>
<comment type="subunit">
    <molecule>N-terminal protease</molecule>
    <text evidence="18 21 24 35 43">Interacts (via N-terminus) with host SP1; this interaction induces proteasomal degradation of SP1 with subsequent down-regulation of HDAC1 and ISG15 expression thereby counteracting the host innate immunity (PubMed:37796122). Interacts (via C-terminus) with host IRF3 (PubMed:17215286, PubMed:18987150, PubMed:19540847, PubMed:27334592).</text>
</comment>
<comment type="subunit">
    <molecule>Capsid protein C</molecule>
    <text evidence="32">Interacts with host OS9 (PubMed:25010283).</text>
</comment>
<comment type="subunit">
    <molecule>E(rns) glycoprotein</molecule>
    <text evidence="20 33 39">Homodimer; disulfide-linked (PubMed:1870198, PubMed:29235980). Interacts with host RPSA (PubMed:25694590).</text>
</comment>
<comment type="subunit">
    <molecule>Envelope glycoprotein E1</molecule>
    <text evidence="29">Homodimer; disulfide-linked (PubMed:2370675). Heterodimer with E1; disulfide-linked (PubMed:2370675).</text>
</comment>
<comment type="subunit">
    <molecule>Envelope glycoprotein E2</molecule>
    <text evidence="4 29 34 42">Homodimer; disulfide-linked (PubMed:2370675). Heterodimer with E1; disulfide-linked (PubMed:2370675). Interacts with host TRX2 (PubMed:26041303). Interacts with host receptor ADAM17 (via metalloproteinase domain); this interaction allows binding and probably entry of the virus into the host cell (PubMed:33684175). Interacts with host ANXA2; this interaction allows binding and probably entry of the virus into the host cell (By similarity). Interacts with host MERTK; this interaction allows binding and probably entry of the virus into the host cell (By similarity).</text>
</comment>
<comment type="subunit">
    <molecule>Serine protease NS3</molecule>
    <text evidence="51">Interacts with host TRAF6; this interaction inhibits host NF-kappa-B pathway. Interacts with NS5B; this interaction enhances RNA-dependent RNA polymerase activity. Interacts with protein NS4A.</text>
</comment>
<comment type="subunit">
    <molecule>Non-structural protein 4B</molecule>
    <text evidence="38 40">Interacts with host RAB5, this interaction facilitates the formation of NS4B-related complex (PubMed:28848503). Interacts with host FTH1; this interaction plays a positive role in viral anti-apoptosis (PubMed:29844394).</text>
</comment>
<comment type="subunit">
    <molecule>Non-structural protein 5A</molecule>
    <text evidence="28 41">Interacts with RNA-directed RNA polymerase (PubMed:22795973). Interacts with host RSAD2; this interaction inhibits viral replication (PubMed:31517388).</text>
</comment>
<comment type="subunit">
    <molecule>RNA-directed RNA polymerase</molecule>
    <text evidence="28 41">Interacts with NS5A; this interaction promotes viral replication.</text>
</comment>
<comment type="interaction">
    <interactant intactId="EBI-10901281">
        <id>PRO_0000038050</id>
    </interactant>
    <interactant intactId="EBI-352022">
        <id>Q08211</id>
        <label>DHX9</label>
    </interactant>
    <organismsDiffer>true</organismsDiffer>
    <experiments>6</experiments>
</comment>
<comment type="interaction">
    <interactant intactId="EBI-10901281">
        <id>PRO_0000038050</id>
    </interactant>
    <interactant intactId="EBI-12512266">
        <id>Q764M6</id>
        <label>IRF3</label>
    </interactant>
    <organismsDiffer>true</organismsDiffer>
    <experiments>4</experiments>
</comment>
<comment type="interaction">
    <interactant intactId="EBI-10901281">
        <id>PRO_0000038050</id>
    </interactant>
    <interactant intactId="EBI-354065">
        <id>P67809</id>
        <label>YBX1</label>
    </interactant>
    <organismsDiffer>true</organismsDiffer>
    <experiments>4</experiments>
</comment>
<comment type="interaction">
    <interactant intactId="EBI-12513719">
        <id>PRO_0000038060</id>
    </interactant>
    <interactant intactId="EBI-12512146">
        <id>A0A8D1U8F1</id>
    </interactant>
    <organismsDiffer>true</organismsDiffer>
    <experiments>4</experiments>
</comment>
<comment type="subcellular location">
    <molecule>N-terminal protease</molecule>
    <subcellularLocation>
        <location evidence="18">Host cytoplasm</location>
    </subcellularLocation>
</comment>
<comment type="subcellular location">
    <molecule>Capsid protein C</molecule>
    <subcellularLocation>
        <location evidence="36">Virion</location>
    </subcellularLocation>
</comment>
<comment type="subcellular location">
    <molecule>E(rns) glycoprotein</molecule>
    <subcellularLocation>
        <location evidence="36">Host cell membrane</location>
        <topology>Peripheral membrane protein</topology>
    </subcellularLocation>
    <subcellularLocation>
        <location evidence="36">Virion membrane</location>
        <topology evidence="51">Peripheral membrane protein</topology>
    </subcellularLocation>
    <text>The C-terminus membrane anchor of Erns represents an amphipathic helix embedded in plane into the membrane.</text>
</comment>
<comment type="subcellular location">
    <molecule>Envelope glycoprotein E2</molecule>
    <subcellularLocation>
        <location evidence="36">Host cell surface</location>
    </subcellularLocation>
    <subcellularLocation>
        <location evidence="36">Virion membrane</location>
    </subcellularLocation>
</comment>
<comment type="subcellular location">
    <molecule>Cysteine protease NS2</molecule>
    <subcellularLocation>
        <location evidence="12">Host membrane</location>
        <topology evidence="12">Multi-pass membrane protein</topology>
    </subcellularLocation>
</comment>
<comment type="subcellular location">
    <molecule>Serine protease NS3</molecule>
    <subcellularLocation>
        <location evidence="38">Host cytoplasm</location>
    </subcellularLocation>
</comment>
<comment type="subcellular location">
    <molecule>Non-structural protein 4B</molecule>
    <subcellularLocation>
        <location evidence="38 40">Host cytoplasm</location>
    </subcellularLocation>
</comment>
<comment type="subcellular location">
    <molecule>Non-structural protein 5A</molecule>
    <subcellularLocation>
        <location evidence="38">Host cytoplasm</location>
    </subcellularLocation>
</comment>
<comment type="induction">
    <text evidence="48">Translated cap independently from an internal ribosome entry site (IRES).</text>
</comment>
<comment type="domain">
    <molecule>N-terminal protease</molecule>
    <text evidence="24">Contains a zinc-binding TRASH region (PubMed:19540847). This region is required for binding host IRF3 and inducing its proteasomal degradation (PubMed:19540847).</text>
</comment>
<comment type="PTM">
    <molecule>E(rns) glycoprotein</molecule>
    <text evidence="20">Heavily glycosylated.</text>
</comment>
<comment type="PTM">
    <text evidence="44 46">The viral RNA of pestiviruses is expressed as a single polyprotein which undergoes post-translational proteolytic processing resulting in the production of at least eleven individual proteins. The N-terminal protease cleaves itself from the nascent polyprotein autocatalytically and thereby generates the N-terminus of the adjacent viral capsid protein C.</text>
</comment>
<comment type="PTM">
    <molecule>Genome polyprotein</molecule>
    <text>Cleavage between E2 and p7 is partial.</text>
</comment>
<comment type="similarity">
    <text evidence="51">Belongs to the pestivirus polyprotein family.</text>
</comment>